<feature type="chain" id="PRO_0000019929" description="Nuclear pore complex protein Nup98">
    <location>
        <begin position="1"/>
        <end position="880"/>
    </location>
</feature>
<feature type="chain" id="PRO_0000019930" description="Nuclear pore complex protein Nup96">
    <location>
        <begin position="881"/>
        <end position="1817"/>
    </location>
</feature>
<feature type="domain" description="Peptidase S59" evidence="2">
    <location>
        <begin position="738"/>
        <end position="880"/>
    </location>
</feature>
<feature type="region of interest" description="FG repeats 1">
    <location>
        <begin position="1"/>
        <end position="156"/>
    </location>
</feature>
<feature type="region of interest" description="GLEBS; interaction with RAE1" evidence="5">
    <location>
        <begin position="157"/>
        <end position="213"/>
    </location>
</feature>
<feature type="region of interest" description="FG repeats 2">
    <location>
        <begin position="214"/>
        <end position="480"/>
    </location>
</feature>
<feature type="region of interest" description="Disordered" evidence="3">
    <location>
        <begin position="512"/>
        <end position="535"/>
    </location>
</feature>
<feature type="region of interest" description="Disordered" evidence="3">
    <location>
        <begin position="614"/>
        <end position="633"/>
    </location>
</feature>
<feature type="region of interest" description="Disordered" evidence="3">
    <location>
        <begin position="662"/>
        <end position="682"/>
    </location>
</feature>
<feature type="region of interest" description="Disordered" evidence="3">
    <location>
        <begin position="886"/>
        <end position="937"/>
    </location>
</feature>
<feature type="compositionally biased region" description="Basic and acidic residues" evidence="3">
    <location>
        <begin position="525"/>
        <end position="534"/>
    </location>
</feature>
<feature type="compositionally biased region" description="Polar residues" evidence="3">
    <location>
        <begin position="670"/>
        <end position="682"/>
    </location>
</feature>
<feature type="active site" description="Nucleophile" evidence="11 18">
    <location>
        <position position="881"/>
    </location>
</feature>
<feature type="site" description="Breakpoint for translocation to form the NUP98-RAP1GDS1 fusion protein. Breakpoint for translocation to form the NUP98-RAP1GDS1 fusion protein" evidence="6 15">
    <location>
        <begin position="391"/>
        <end position="392"/>
    </location>
</feature>
<feature type="site" description="Breakpoint for translocation to form the NUP98-HOXA9 fusion protein. Breakpoint for translocation to form the NUP98-RAP1GDS1 fusion protein" evidence="6 29">
    <location>
        <begin position="486"/>
        <end position="487"/>
    </location>
</feature>
<feature type="site" description="Breakpoint for translocation to form NUP98-CCDC28A">
    <location>
        <begin position="531"/>
        <end position="532"/>
    </location>
</feature>
<feature type="site" description="Breakpoint for translocation to form NUP98-PHF23 oncogene">
    <location>
        <begin position="531"/>
        <end position="532"/>
    </location>
</feature>
<feature type="site" description="Breakpoint for translocation to form the NUP98-KDM5A fusion protein" evidence="15">
    <location>
        <begin position="531"/>
        <end position="532"/>
    </location>
</feature>
<feature type="site" description="Cleavage; by autolysis" evidence="4 11 18">
    <location>
        <begin position="880"/>
        <end position="881"/>
    </location>
</feature>
<feature type="modified residue" description="Phosphoserine" evidence="48">
    <location>
        <position position="524"/>
    </location>
</feature>
<feature type="modified residue" description="N6-acetyllysine; alternate" evidence="46">
    <location>
        <position position="603"/>
    </location>
</feature>
<feature type="modified residue" description="Phosphoserine" evidence="40 41 42 47 48 50">
    <location>
        <position position="608"/>
    </location>
</feature>
<feature type="modified residue" description="Phosphoserine" evidence="40 41 42 47 48 49 50 51">
    <location>
        <position position="612"/>
    </location>
</feature>
<feature type="modified residue" description="Phosphoserine" evidence="47">
    <location>
        <position position="618"/>
    </location>
</feature>
<feature type="modified residue" description="Phosphoserine" evidence="40 44 47 48 49 50">
    <location>
        <position position="623"/>
    </location>
</feature>
<feature type="modified residue" description="Phosphoserine" evidence="47">
    <location>
        <position position="625"/>
    </location>
</feature>
<feature type="modified residue" description="Phosphoserine" evidence="1">
    <location>
        <position position="653"/>
    </location>
</feature>
<feature type="modified residue" description="Phosphothreonine" evidence="48">
    <location>
        <position position="670"/>
    </location>
</feature>
<feature type="modified residue" description="Phosphoserine" evidence="48">
    <location>
        <position position="673"/>
    </location>
</feature>
<feature type="modified residue" description="Phosphoserine" evidence="48 50">
    <location>
        <position position="681"/>
    </location>
</feature>
<feature type="modified residue" description="Phosphoserine" evidence="49 50">
    <location>
        <position position="683"/>
    </location>
</feature>
<feature type="modified residue" description="Phosphoserine" evidence="41 44 48 49 50">
    <location>
        <position position="839"/>
    </location>
</feature>
<feature type="modified residue" description="Phosphoserine" evidence="41 43 44 45 48 49 50 51">
    <location>
        <position position="888"/>
    </location>
</feature>
<feature type="modified residue" description="Phosphoserine" evidence="51">
    <location>
        <position position="897"/>
    </location>
</feature>
<feature type="modified residue" description="Phosphoserine" evidence="44 48">
    <location>
        <position position="934"/>
    </location>
</feature>
<feature type="modified residue" description="Phosphothreonine" evidence="44 50">
    <location>
        <position position="1000"/>
    </location>
</feature>
<feature type="modified residue" description="Phosphoserine" evidence="44 50">
    <location>
        <position position="1023"/>
    </location>
</feature>
<feature type="modified residue" description="Phosphoserine" evidence="40 44 50">
    <location>
        <position position="1028"/>
    </location>
</feature>
<feature type="modified residue" description="Phosphoserine" evidence="44 50">
    <location>
        <position position="1043"/>
    </location>
</feature>
<feature type="modified residue" description="Phosphoserine" evidence="40 44 50">
    <location>
        <position position="1060"/>
    </location>
</feature>
<feature type="modified residue" description="Phosphoserine" evidence="1">
    <location>
        <position position="1064"/>
    </location>
</feature>
<feature type="modified residue" description="Phosphothreonine" evidence="44">
    <location>
        <position position="1070"/>
    </location>
</feature>
<feature type="modified residue" description="Phosphoserine" evidence="1">
    <location>
        <position position="1329"/>
    </location>
</feature>
<feature type="modified residue" description="Phosphothreonine" evidence="1">
    <location>
        <position position="1772"/>
    </location>
</feature>
<feature type="cross-link" description="Glycyl lysine isopeptide (Lys-Gly) (interchain with G-Cter in SUMO2)" evidence="52">
    <location>
        <position position="563"/>
    </location>
</feature>
<feature type="cross-link" description="Glycyl lysine isopeptide (Lys-Gly) (interchain with G-Cter in SUMO2); alternate" evidence="52">
    <location>
        <position position="603"/>
    </location>
</feature>
<feature type="cross-link" description="Glycyl lysine isopeptide (Lys-Gly) (interchain with G-Cter in SUMO2)" evidence="52">
    <location>
        <position position="665"/>
    </location>
</feature>
<feature type="splice variant" id="VSP_003619" description="In isoform 2, isoform 4 and isoform 5." evidence="30 31 32 33 35 36 37">
    <location>
        <begin position="393"/>
        <end position="409"/>
    </location>
</feature>
<feature type="splice variant" id="VSP_007942" description="In isoform 3 and isoform 4." evidence="31 33 34">
    <original>SQSPEV</original>
    <variation>VEKKGQ</variation>
    <location>
        <begin position="932"/>
        <end position="937"/>
    </location>
</feature>
<feature type="splice variant" id="VSP_007943" description="In isoform 3 and isoform 4." evidence="31 33 34">
    <location>
        <begin position="938"/>
        <end position="1817"/>
    </location>
</feature>
<feature type="splice variant" id="VSP_038328" description="In isoform 6." evidence="31">
    <original>WSVPPPLTSVFTMPSPAPEVPLKTVGTRRQLGLVPREKSVTYGKGKLLMDMALFMGRSFRVGWGPNWTLANSGEQLNGSHELENHQIADSMEFGFLPNPVAVKP</original>
    <variation>C</variation>
    <location>
        <begin position="1085"/>
        <end position="1188"/>
    </location>
</feature>
<feature type="splice variant" id="VSP_007944" description="In isoform 2." evidence="30">
    <original>RHYDLNQLLEPRSITADPLDYRLSWHLWEVLRALNYTHLSAQCEGVLQASYAGQLESEGLWEWAIFVLLHIDNSG</original>
    <variation>S</variation>
    <location>
        <begin position="1502"/>
        <end position="1576"/>
    </location>
</feature>
<feature type="sequence variant" id="VAR_035859" description="In a breast cancer sample; somatic mutation." evidence="16">
    <original>G</original>
    <variation>V</variation>
    <location>
        <position position="1669"/>
    </location>
</feature>
<feature type="mutagenesis site" description="No effect on autoprocessing. Severe loss of autoprocessing; when associated with A-879." evidence="11">
    <original>K</original>
    <variation>A</variation>
    <location>
        <position position="808"/>
    </location>
</feature>
<feature type="mutagenesis site" description="Slight reduction in autoprocessing." evidence="11">
    <original>N</original>
    <variation>A</variation>
    <location>
        <position position="816"/>
    </location>
</feature>
<feature type="mutagenesis site" description="Moderate reduction in autoprocessing." evidence="11">
    <original>H</original>
    <variation>A</variation>
    <variation>Q</variation>
    <location>
        <position position="879"/>
    </location>
</feature>
<feature type="mutagenesis site" description="Loss of processing. Loss of nuclear membrane localization." evidence="4">
    <original>FSKY</original>
    <variation>SSKR</variation>
    <location>
        <begin position="880"/>
        <end position="883"/>
    </location>
</feature>
<feature type="mutagenesis site" description="Loss of autoprocessing. Loss of nuclear membrane localization." evidence="11 18">
    <original>S</original>
    <variation>A</variation>
    <location>
        <position position="881"/>
    </location>
</feature>
<feature type="mutagenesis site" description="No effect in autoprocessing." evidence="11">
    <original>K</original>
    <variation>A</variation>
    <location>
        <position position="882"/>
    </location>
</feature>
<feature type="sequence conflict" description="In Ref. 6; AAH41136." evidence="38" ref="6">
    <original>L</original>
    <variation>S</variation>
    <location>
        <position position="318"/>
    </location>
</feature>
<feature type="sequence conflict" description="In Ref. 6; AAH41136." evidence="38" ref="6">
    <original>S</original>
    <variation>G</variation>
    <location>
        <position position="376"/>
    </location>
</feature>
<feature type="sequence conflict" description="In Ref. 3; AAD22395/AAD22396." evidence="38" ref="3">
    <original>EK</original>
    <variation>VF</variation>
    <location>
        <begin position="756"/>
        <end position="757"/>
    </location>
</feature>
<feature type="sequence conflict" description="In Ref. 3; AAD22395/AAD22396 and 4; AAL56659." evidence="38" ref="3 4">
    <original>G</original>
    <variation>A</variation>
    <location>
        <position position="1281"/>
    </location>
</feature>
<feature type="sequence conflict" description="In Ref. 3; AAD22395." evidence="38" ref="3">
    <original>ALN</original>
    <variation>DLK</variation>
    <location>
        <begin position="1534"/>
        <end position="1536"/>
    </location>
</feature>
<feature type="sequence conflict" description="In Ref. 7; AAF19342." evidence="38" ref="7">
    <original>E</original>
    <variation>D</variation>
    <location>
        <position position="1594"/>
    </location>
</feature>
<feature type="sequence conflict" description="In Ref. 4; AAL56659." evidence="38" ref="4">
    <original>S</original>
    <variation>T</variation>
    <location>
        <position position="1598"/>
    </location>
</feature>
<feature type="sequence conflict" description="In Ref. 7; AAF19342." evidence="38" ref="7">
    <original>K</original>
    <variation>N</variation>
    <location>
        <position position="1639"/>
    </location>
</feature>
<feature type="sequence conflict" description="In Ref. 7; AAF19342." evidence="38" ref="7">
    <original>S</original>
    <variation>T</variation>
    <location>
        <position position="1680"/>
    </location>
</feature>
<feature type="strand" evidence="56">
    <location>
        <begin position="91"/>
        <end position="96"/>
    </location>
</feature>
<feature type="strand" evidence="56">
    <location>
        <begin position="100"/>
        <end position="104"/>
    </location>
</feature>
<feature type="strand" evidence="57">
    <location>
        <begin position="105"/>
        <end position="113"/>
    </location>
</feature>
<feature type="strand" evidence="56">
    <location>
        <begin position="120"/>
        <end position="123"/>
    </location>
</feature>
<feature type="strand" evidence="55">
    <location>
        <begin position="168"/>
        <end position="172"/>
    </location>
</feature>
<feature type="strand" evidence="55">
    <location>
        <begin position="181"/>
        <end position="186"/>
    </location>
</feature>
<feature type="helix" evidence="55">
    <location>
        <begin position="189"/>
        <end position="191"/>
    </location>
</feature>
<feature type="turn" evidence="55">
    <location>
        <begin position="193"/>
        <end position="197"/>
    </location>
</feature>
<feature type="helix" evidence="55">
    <location>
        <begin position="200"/>
        <end position="209"/>
    </location>
</feature>
<feature type="strand" evidence="58">
    <location>
        <begin position="306"/>
        <end position="309"/>
    </location>
</feature>
<feature type="strand" evidence="58">
    <location>
        <begin position="312"/>
        <end position="316"/>
    </location>
</feature>
<feature type="strand" evidence="58">
    <location>
        <begin position="318"/>
        <end position="320"/>
    </location>
</feature>
<feature type="strand" evidence="58">
    <location>
        <begin position="322"/>
        <end position="325"/>
    </location>
</feature>
<feature type="strand" evidence="53">
    <location>
        <begin position="741"/>
        <end position="745"/>
    </location>
</feature>
<feature type="helix" evidence="53">
    <location>
        <begin position="747"/>
        <end position="753"/>
    </location>
</feature>
<feature type="strand" evidence="53">
    <location>
        <begin position="761"/>
        <end position="769"/>
    </location>
</feature>
<feature type="turn" evidence="53">
    <location>
        <begin position="770"/>
        <end position="772"/>
    </location>
</feature>
<feature type="strand" evidence="53">
    <location>
        <begin position="773"/>
        <end position="782"/>
    </location>
</feature>
<feature type="helix" evidence="53">
    <location>
        <begin position="788"/>
        <end position="791"/>
    </location>
</feature>
<feature type="strand" evidence="53">
    <location>
        <begin position="792"/>
        <end position="795"/>
    </location>
</feature>
<feature type="strand" evidence="53">
    <location>
        <begin position="798"/>
        <end position="801"/>
    </location>
</feature>
<feature type="helix" evidence="54">
    <location>
        <begin position="805"/>
        <end position="807"/>
    </location>
</feature>
<feature type="strand" evidence="53">
    <location>
        <begin position="819"/>
        <end position="823"/>
    </location>
</feature>
<feature type="turn" evidence="53">
    <location>
        <begin position="831"/>
        <end position="833"/>
    </location>
</feature>
<feature type="helix" evidence="53">
    <location>
        <begin position="840"/>
        <end position="845"/>
    </location>
</feature>
<feature type="helix" evidence="53">
    <location>
        <begin position="848"/>
        <end position="858"/>
    </location>
</feature>
<feature type="strand" evidence="53">
    <location>
        <begin position="862"/>
        <end position="867"/>
    </location>
</feature>
<feature type="turn" evidence="53">
    <location>
        <begin position="868"/>
        <end position="871"/>
    </location>
</feature>
<feature type="strand" evidence="53">
    <location>
        <begin position="872"/>
        <end position="879"/>
    </location>
</feature>
<proteinExistence type="evidence at protein level"/>
<keyword id="KW-0002">3D-structure</keyword>
<keyword id="KW-0007">Acetylation</keyword>
<keyword id="KW-0025">Alternative splicing</keyword>
<keyword id="KW-0068">Autocatalytic cleavage</keyword>
<keyword id="KW-0160">Chromosomal rearrangement</keyword>
<keyword id="KW-0903">Direct protein sequencing</keyword>
<keyword id="KW-0945">Host-virus interaction</keyword>
<keyword id="KW-0378">Hydrolase</keyword>
<keyword id="KW-1017">Isopeptide bond</keyword>
<keyword id="KW-0472">Membrane</keyword>
<keyword id="KW-0509">mRNA transport</keyword>
<keyword id="KW-0906">Nuclear pore complex</keyword>
<keyword id="KW-0539">Nucleus</keyword>
<keyword id="KW-0597">Phosphoprotein</keyword>
<keyword id="KW-0645">Protease</keyword>
<keyword id="KW-0653">Protein transport</keyword>
<keyword id="KW-1267">Proteomics identification</keyword>
<keyword id="KW-1185">Reference proteome</keyword>
<keyword id="KW-0677">Repeat</keyword>
<keyword id="KW-0720">Serine protease</keyword>
<keyword id="KW-0811">Translocation</keyword>
<keyword id="KW-0813">Transport</keyword>
<keyword id="KW-0832">Ubl conjugation</keyword>
<organism>
    <name type="scientific">Homo sapiens</name>
    <name type="common">Human</name>
    <dbReference type="NCBI Taxonomy" id="9606"/>
    <lineage>
        <taxon>Eukaryota</taxon>
        <taxon>Metazoa</taxon>
        <taxon>Chordata</taxon>
        <taxon>Craniata</taxon>
        <taxon>Vertebrata</taxon>
        <taxon>Euteleostomi</taxon>
        <taxon>Mammalia</taxon>
        <taxon>Eutheria</taxon>
        <taxon>Euarchontoglires</taxon>
        <taxon>Primates</taxon>
        <taxon>Haplorrhini</taxon>
        <taxon>Catarrhini</taxon>
        <taxon>Hominidae</taxon>
        <taxon>Homo</taxon>
    </lineage>
</organism>
<dbReference type="EC" id="3.4.21.-" evidence="11 18"/>
<dbReference type="EMBL" id="U41815">
    <property type="protein sequence ID" value="AAC50366.1"/>
    <property type="molecule type" value="mRNA"/>
</dbReference>
<dbReference type="EMBL" id="AB040538">
    <property type="protein sequence ID" value="BAB18537.1"/>
    <property type="molecule type" value="mRNA"/>
</dbReference>
<dbReference type="EMBL" id="AF071076">
    <property type="protein sequence ID" value="AAD22395.1"/>
    <property type="status" value="ALT_SEQ"/>
    <property type="molecule type" value="mRNA"/>
</dbReference>
<dbReference type="EMBL" id="AF071077">
    <property type="protein sequence ID" value="AAD22396.1"/>
    <property type="status" value="ALT_SEQ"/>
    <property type="molecule type" value="mRNA"/>
</dbReference>
<dbReference type="EMBL" id="AF231130">
    <property type="protein sequence ID" value="AAL56659.1"/>
    <property type="molecule type" value="mRNA"/>
</dbReference>
<dbReference type="EMBL" id="AC060812">
    <property type="status" value="NOT_ANNOTATED_CDS"/>
    <property type="molecule type" value="Genomic_DNA"/>
</dbReference>
<dbReference type="EMBL" id="AC090587">
    <property type="status" value="NOT_ANNOTATED_CDS"/>
    <property type="molecule type" value="Genomic_DNA"/>
</dbReference>
<dbReference type="EMBL" id="BC041136">
    <property type="protein sequence ID" value="AAH41136.1"/>
    <property type="molecule type" value="mRNA"/>
</dbReference>
<dbReference type="EMBL" id="BC012906">
    <property type="protein sequence ID" value="AAH12906.2"/>
    <property type="molecule type" value="mRNA"/>
</dbReference>
<dbReference type="EMBL" id="AF116074">
    <property type="protein sequence ID" value="AAF19342.1"/>
    <property type="status" value="ALT_SEQ"/>
    <property type="molecule type" value="mRNA"/>
</dbReference>
<dbReference type="EMBL" id="BT007349">
    <property type="protein sequence ID" value="AAP36013.1"/>
    <property type="molecule type" value="mRNA"/>
</dbReference>
<dbReference type="EMBL" id="AL133601">
    <property type="protein sequence ID" value="CAB63736.1"/>
    <property type="molecule type" value="mRNA"/>
</dbReference>
<dbReference type="EMBL" id="AL137613">
    <property type="protein sequence ID" value="CAB70842.1"/>
    <property type="molecule type" value="mRNA"/>
</dbReference>
<dbReference type="CCDS" id="CCDS31347.1">
    <molecule id="P52948-2"/>
</dbReference>
<dbReference type="CCDS" id="CCDS41605.1">
    <molecule id="P52948-3"/>
</dbReference>
<dbReference type="CCDS" id="CCDS41606.1">
    <molecule id="P52948-4"/>
</dbReference>
<dbReference type="CCDS" id="CCDS7746.1">
    <molecule id="P52948-5"/>
</dbReference>
<dbReference type="CCDS" id="CCDS91412.1">
    <molecule id="P52948-1"/>
</dbReference>
<dbReference type="PIR" id="T43443">
    <property type="entry name" value="T43443"/>
</dbReference>
<dbReference type="RefSeq" id="NP_001352055.1">
    <molecule id="P52948-1"/>
    <property type="nucleotide sequence ID" value="NM_001365126.2"/>
</dbReference>
<dbReference type="RefSeq" id="NP_005378.4">
    <molecule id="P52948-3"/>
    <property type="nucleotide sequence ID" value="NM_005387.6"/>
</dbReference>
<dbReference type="RefSeq" id="NP_057404.2">
    <molecule id="P52948-5"/>
    <property type="nucleotide sequence ID" value="NM_016320.4"/>
</dbReference>
<dbReference type="RefSeq" id="NP_624357.1">
    <molecule id="P52948-4"/>
    <property type="nucleotide sequence ID" value="NM_139131.5"/>
</dbReference>
<dbReference type="RefSeq" id="NP_624358.2">
    <molecule id="P52948-2"/>
    <property type="nucleotide sequence ID" value="NM_139132.4"/>
</dbReference>
<dbReference type="PDB" id="1KO6">
    <property type="method" value="X-ray"/>
    <property type="resolution" value="3.00 A"/>
    <property type="chains" value="A/C=695-880, B/D=881-941"/>
</dbReference>
<dbReference type="PDB" id="2Q5X">
    <property type="method" value="X-ray"/>
    <property type="resolution" value="1.90 A"/>
    <property type="chains" value="A=733-887"/>
</dbReference>
<dbReference type="PDB" id="2Q5Y">
    <property type="method" value="X-ray"/>
    <property type="resolution" value="2.30 A"/>
    <property type="chains" value="A/C=729-880"/>
</dbReference>
<dbReference type="PDB" id="3MMY">
    <property type="method" value="X-ray"/>
    <property type="resolution" value="1.65 A"/>
    <property type="chains" value="B/D/F/H=158-213"/>
</dbReference>
<dbReference type="PDB" id="4OWR">
    <property type="method" value="X-ray"/>
    <property type="resolution" value="3.15 A"/>
    <property type="chains" value="B=157-213"/>
</dbReference>
<dbReference type="PDB" id="5A9Q">
    <property type="method" value="EM"/>
    <property type="resolution" value="23.00 A"/>
    <property type="chains" value="5/E/N/W=881-1817"/>
</dbReference>
<dbReference type="PDB" id="6BZM">
    <property type="method" value="EM"/>
    <property type="resolution" value="0.90 A"/>
    <property type="chains" value="A/B=116-123"/>
</dbReference>
<dbReference type="PDB" id="7F60">
    <property type="method" value="X-ray"/>
    <property type="resolution" value="2.85 A"/>
    <property type="chains" value="C/D=1-1817"/>
</dbReference>
<dbReference type="PDB" id="7F90">
    <property type="method" value="X-ray"/>
    <property type="resolution" value="2.39 A"/>
    <property type="chains" value="B/D=1-1817"/>
</dbReference>
<dbReference type="PDB" id="7MNI">
    <property type="method" value="X-ray"/>
    <property type="resolution" value="2.00 A"/>
    <property type="chains" value="B/D=732-880"/>
</dbReference>
<dbReference type="PDB" id="7PEQ">
    <property type="method" value="EM"/>
    <property type="resolution" value="35.00 A"/>
    <property type="chains" value="AE/BE/CE/DE=881-1817"/>
</dbReference>
<dbReference type="PDB" id="7Q64">
    <property type="method" value="EM"/>
    <property type="resolution" value="2.76 A"/>
    <property type="chains" value="A/B/C/D/E/F/G/H/I/J/K/L/M/N/O/P/Q/R/S/T/U/V/W/X/Y/Z/a/b/c/d=85-124"/>
</dbReference>
<dbReference type="PDB" id="7Q65">
    <property type="method" value="EM"/>
    <property type="resolution" value="3.32 A"/>
    <property type="chains" value="A/B/C/D/E/F/G/H/I/J/K/L/M/N/O/P/Q/R/S/T/U/V=85-124"/>
</dbReference>
<dbReference type="PDB" id="7Q66">
    <property type="method" value="EM"/>
    <property type="resolution" value="2.79 A"/>
    <property type="chains" value="A/B/C/D/E/F/G/H/I/J/K/L/M/N/O/P/Q/R/S/T/U/V=85-124"/>
</dbReference>
<dbReference type="PDB" id="7Q67">
    <property type="method" value="EM"/>
    <property type="resolution" value="3.37 A"/>
    <property type="chains" value="A/B/C/D/E/F/G/H/I/J/K=85-124"/>
</dbReference>
<dbReference type="PDB" id="7VPG">
    <property type="method" value="X-ray"/>
    <property type="resolution" value="2.49 A"/>
    <property type="chains" value="B/D/F/H=158-213"/>
</dbReference>
<dbReference type="PDB" id="7VPH">
    <property type="method" value="X-ray"/>
    <property type="resolution" value="2.80 A"/>
    <property type="chains" value="B/D/F/H=158-213"/>
</dbReference>
<dbReference type="PDB" id="8CI8">
    <property type="method" value="EM"/>
    <property type="resolution" value="2.67 A"/>
    <property type="chains" value="A/B/C/D/E/F/G/H/I/J/K/L/M/N/O/P/Q/R/S/T/U/V/W/X/Y=298-327"/>
</dbReference>
<dbReference type="PDBsum" id="1KO6"/>
<dbReference type="PDBsum" id="2Q5X"/>
<dbReference type="PDBsum" id="2Q5Y"/>
<dbReference type="PDBsum" id="3MMY"/>
<dbReference type="PDBsum" id="4OWR"/>
<dbReference type="PDBsum" id="5A9Q"/>
<dbReference type="PDBsum" id="6BZM"/>
<dbReference type="PDBsum" id="7F60"/>
<dbReference type="PDBsum" id="7F90"/>
<dbReference type="PDBsum" id="7MNI"/>
<dbReference type="PDBsum" id="7PEQ"/>
<dbReference type="PDBsum" id="7Q64"/>
<dbReference type="PDBsum" id="7Q65"/>
<dbReference type="PDBsum" id="7Q66"/>
<dbReference type="PDBsum" id="7Q67"/>
<dbReference type="PDBsum" id="7VPG"/>
<dbReference type="PDBsum" id="7VPH"/>
<dbReference type="PDBsum" id="8CI8"/>
<dbReference type="EMDB" id="EMD-13851"/>
<dbReference type="EMDB" id="EMD-13852"/>
<dbReference type="EMDB" id="EMD-13853"/>
<dbReference type="EMDB" id="EMD-13854"/>
<dbReference type="EMDB" id="EMD-14321"/>
<dbReference type="EMDB" id="EMD-14322"/>
<dbReference type="EMDB" id="EMD-16671"/>
<dbReference type="SASBDB" id="P52948"/>
<dbReference type="SMR" id="P52948"/>
<dbReference type="BioGRID" id="110982">
    <property type="interactions" value="252"/>
</dbReference>
<dbReference type="ComplexPortal" id="CPX-873">
    <property type="entry name" value="Nuclear pore complex"/>
</dbReference>
<dbReference type="CORUM" id="P52948"/>
<dbReference type="DIP" id="DIP-32484N"/>
<dbReference type="FunCoup" id="P52948">
    <property type="interactions" value="4796"/>
</dbReference>
<dbReference type="IntAct" id="P52948">
    <property type="interactions" value="117"/>
</dbReference>
<dbReference type="MINT" id="P52948"/>
<dbReference type="STRING" id="9606.ENSP00000316032"/>
<dbReference type="MEROPS" id="S59.001"/>
<dbReference type="TCDB" id="1.I.1.1.3">
    <property type="family name" value="the nuclear pore complex (npc) family"/>
</dbReference>
<dbReference type="GlyConnect" id="1578">
    <property type="glycosylation" value="1 N-Linked glycan (1 site)"/>
</dbReference>
<dbReference type="GlyConnect" id="2900">
    <molecule id="P52948-4"/>
    <property type="glycosylation" value="1 O-GlcNAc glycan (3 sites)"/>
</dbReference>
<dbReference type="GlyCosmos" id="P52948">
    <property type="glycosylation" value="92 sites, 3 glycans"/>
</dbReference>
<dbReference type="GlyGen" id="P52948">
    <property type="glycosylation" value="103 sites, 39 N-linked glycans (2 sites), 2 O-linked glycans (101 sites)"/>
</dbReference>
<dbReference type="iPTMnet" id="P52948"/>
<dbReference type="MetOSite" id="P52948"/>
<dbReference type="PhosphoSitePlus" id="P52948"/>
<dbReference type="SwissPalm" id="P52948"/>
<dbReference type="BioMuta" id="NUP98"/>
<dbReference type="DMDM" id="308153660"/>
<dbReference type="jPOST" id="P52948"/>
<dbReference type="MassIVE" id="P52948"/>
<dbReference type="PaxDb" id="9606-ENSP00000316032"/>
<dbReference type="PeptideAtlas" id="P52948"/>
<dbReference type="ProteomicsDB" id="56555">
    <molecule id="P52948-1"/>
</dbReference>
<dbReference type="ProteomicsDB" id="56556">
    <molecule id="P52948-2"/>
</dbReference>
<dbReference type="ProteomicsDB" id="56557">
    <molecule id="P52948-3"/>
</dbReference>
<dbReference type="ProteomicsDB" id="56558">
    <molecule id="P52948-4"/>
</dbReference>
<dbReference type="ProteomicsDB" id="56559">
    <molecule id="P52948-5"/>
</dbReference>
<dbReference type="ProteomicsDB" id="56560">
    <molecule id="P52948-6"/>
</dbReference>
<dbReference type="Pumba" id="P52948"/>
<dbReference type="Antibodypedia" id="23367">
    <property type="antibodies" value="341 antibodies from 33 providers"/>
</dbReference>
<dbReference type="DNASU" id="4928"/>
<dbReference type="Ensembl" id="ENST00000324932.12">
    <molecule id="P52948-5"/>
    <property type="protein sequence ID" value="ENSP00000316032.7"/>
    <property type="gene ID" value="ENSG00000110713.18"/>
</dbReference>
<dbReference type="Ensembl" id="ENST00000355260.8">
    <molecule id="P52948-2"/>
    <property type="protein sequence ID" value="ENSP00000347404.3"/>
    <property type="gene ID" value="ENSG00000110713.18"/>
</dbReference>
<dbReference type="Ensembl" id="ENST00000359171.8">
    <molecule id="P52948-1"/>
    <property type="protein sequence ID" value="ENSP00000352091.5"/>
    <property type="gene ID" value="ENSG00000110713.18"/>
</dbReference>
<dbReference type="Ensembl" id="ENST00000397004.9">
    <molecule id="P52948-4"/>
    <property type="protein sequence ID" value="ENSP00000380199.4"/>
    <property type="gene ID" value="ENSG00000110713.18"/>
</dbReference>
<dbReference type="Ensembl" id="ENST00000397007.10">
    <molecule id="P52948-3"/>
    <property type="protein sequence ID" value="ENSP00000380202.4"/>
    <property type="gene ID" value="ENSG00000110713.18"/>
</dbReference>
<dbReference type="Ensembl" id="ENST00000700606.1">
    <molecule id="P52948-4"/>
    <property type="protein sequence ID" value="ENSP00000515094.1"/>
    <property type="gene ID" value="ENSG00000110713.18"/>
</dbReference>
<dbReference type="GeneID" id="4928"/>
<dbReference type="KEGG" id="hsa:4928"/>
<dbReference type="MANE-Select" id="ENST00000324932.12">
    <molecule id="P52948-5"/>
    <property type="protein sequence ID" value="ENSP00000316032.7"/>
    <property type="RefSeq nucleotide sequence ID" value="NM_016320.5"/>
    <property type="RefSeq protein sequence ID" value="NP_057404.2"/>
</dbReference>
<dbReference type="UCSC" id="uc001lyh.3">
    <molecule id="P52948-1"/>
    <property type="organism name" value="human"/>
</dbReference>
<dbReference type="AGR" id="HGNC:8068"/>
<dbReference type="CTD" id="4928"/>
<dbReference type="DisGeNET" id="4928"/>
<dbReference type="GeneCards" id="NUP98"/>
<dbReference type="HGNC" id="HGNC:8068">
    <property type="gene designation" value="NUP98"/>
</dbReference>
<dbReference type="HPA" id="ENSG00000110713">
    <property type="expression patterns" value="Low tissue specificity"/>
</dbReference>
<dbReference type="MalaCards" id="NUP98"/>
<dbReference type="MIM" id="601021">
    <property type="type" value="gene"/>
</dbReference>
<dbReference type="neXtProt" id="NX_P52948"/>
<dbReference type="OpenTargets" id="ENSG00000110713"/>
<dbReference type="PharmGKB" id="PA31856"/>
<dbReference type="VEuPathDB" id="HostDB:ENSG00000110713"/>
<dbReference type="eggNOG" id="KOG0845">
    <property type="taxonomic scope" value="Eukaryota"/>
</dbReference>
<dbReference type="GeneTree" id="ENSGT00550000074799"/>
<dbReference type="HOGENOM" id="CLU_002330_1_0_1"/>
<dbReference type="InParanoid" id="P52948"/>
<dbReference type="OMA" id="PMGKGLN"/>
<dbReference type="OrthoDB" id="3797628at2759"/>
<dbReference type="PAN-GO" id="P52948">
    <property type="GO annotations" value="0 GO annotations based on evolutionary models"/>
</dbReference>
<dbReference type="PhylomeDB" id="P52948"/>
<dbReference type="TreeFam" id="TF343335"/>
<dbReference type="PathwayCommons" id="P52948"/>
<dbReference type="Reactome" id="R-HSA-1169408">
    <property type="pathway name" value="ISG15 antiviral mechanism"/>
</dbReference>
<dbReference type="Reactome" id="R-HSA-141444">
    <molecule id="P52948-5"/>
    <property type="pathway name" value="Amplification of signal from unattached kinetochores via a MAD2 inhibitory signal"/>
</dbReference>
<dbReference type="Reactome" id="R-HSA-159227">
    <property type="pathway name" value="Transport of the SLBP independent Mature mRNA"/>
</dbReference>
<dbReference type="Reactome" id="R-HSA-159230">
    <property type="pathway name" value="Transport of the SLBP Dependant Mature mRNA"/>
</dbReference>
<dbReference type="Reactome" id="R-HSA-159231">
    <property type="pathway name" value="Transport of Mature mRNA Derived from an Intronless Transcript"/>
</dbReference>
<dbReference type="Reactome" id="R-HSA-159236">
    <property type="pathway name" value="Transport of Mature mRNA derived from an Intron-Containing Transcript"/>
</dbReference>
<dbReference type="Reactome" id="R-HSA-165054">
    <property type="pathway name" value="Rev-mediated nuclear export of HIV RNA"/>
</dbReference>
<dbReference type="Reactome" id="R-HSA-168271">
    <property type="pathway name" value="Transport of Ribonucleoproteins into the Host Nucleus"/>
</dbReference>
<dbReference type="Reactome" id="R-HSA-168276">
    <property type="pathway name" value="NS1 Mediated Effects on Host Pathways"/>
</dbReference>
<dbReference type="Reactome" id="R-HSA-168325">
    <property type="pathway name" value="Viral Messenger RNA Synthesis"/>
</dbReference>
<dbReference type="Reactome" id="R-HSA-168333">
    <property type="pathway name" value="NEP/NS2 Interacts with the Cellular Export Machinery"/>
</dbReference>
<dbReference type="Reactome" id="R-HSA-170822">
    <property type="pathway name" value="Regulation of Glucokinase by Glucokinase Regulatory Protein"/>
</dbReference>
<dbReference type="Reactome" id="R-HSA-180746">
    <property type="pathway name" value="Nuclear import of Rev protein"/>
</dbReference>
<dbReference type="Reactome" id="R-HSA-180910">
    <property type="pathway name" value="Vpr-mediated nuclear import of PICs"/>
</dbReference>
<dbReference type="Reactome" id="R-HSA-191859">
    <property type="pathway name" value="snRNP Assembly"/>
</dbReference>
<dbReference type="Reactome" id="R-HSA-2467813">
    <molecule id="P52948-5"/>
    <property type="pathway name" value="Separation of Sister Chromatids"/>
</dbReference>
<dbReference type="Reactome" id="R-HSA-2500257">
    <molecule id="P52948-5"/>
    <property type="pathway name" value="Resolution of Sister Chromatid Cohesion"/>
</dbReference>
<dbReference type="Reactome" id="R-HSA-3108214">
    <property type="pathway name" value="SUMOylation of DNA damage response and repair proteins"/>
</dbReference>
<dbReference type="Reactome" id="R-HSA-3232142">
    <property type="pathway name" value="SUMOylation of ubiquitinylation proteins"/>
</dbReference>
<dbReference type="Reactome" id="R-HSA-3301854">
    <property type="pathway name" value="Nuclear Pore Complex (NPC) Disassembly"/>
</dbReference>
<dbReference type="Reactome" id="R-HSA-3371453">
    <property type="pathway name" value="Regulation of HSF1-mediated heat shock response"/>
</dbReference>
<dbReference type="Reactome" id="R-HSA-4085377">
    <property type="pathway name" value="SUMOylation of SUMOylation proteins"/>
</dbReference>
<dbReference type="Reactome" id="R-HSA-4551638">
    <property type="pathway name" value="SUMOylation of chromatin organization proteins"/>
</dbReference>
<dbReference type="Reactome" id="R-HSA-4570464">
    <property type="pathway name" value="SUMOylation of RNA binding proteins"/>
</dbReference>
<dbReference type="Reactome" id="R-HSA-4615885">
    <property type="pathway name" value="SUMOylation of DNA replication proteins"/>
</dbReference>
<dbReference type="Reactome" id="R-HSA-5578749">
    <property type="pathway name" value="Transcriptional regulation by small RNAs"/>
</dbReference>
<dbReference type="Reactome" id="R-HSA-5619107">
    <property type="pathway name" value="Defective TPR may confer susceptibility towards thyroid papillary carcinoma (TPC)"/>
</dbReference>
<dbReference type="Reactome" id="R-HSA-5663220">
    <molecule id="P52948-5"/>
    <property type="pathway name" value="RHO GTPases Activate Formins"/>
</dbReference>
<dbReference type="Reactome" id="R-HSA-6784531">
    <property type="pathway name" value="tRNA processing in the nucleus"/>
</dbReference>
<dbReference type="Reactome" id="R-HSA-68877">
    <molecule id="P52948-5"/>
    <property type="pathway name" value="Mitotic Prometaphase"/>
</dbReference>
<dbReference type="Reactome" id="R-HSA-9609690">
    <property type="pathway name" value="HCMV Early Events"/>
</dbReference>
<dbReference type="Reactome" id="R-HSA-9610379">
    <property type="pathway name" value="HCMV Late Events"/>
</dbReference>
<dbReference type="Reactome" id="R-HSA-9615933">
    <molecule id="P52948-5"/>
    <property type="pathway name" value="Postmitotic nuclear pore complex (NPC) reformation"/>
</dbReference>
<dbReference type="Reactome" id="R-HSA-9648025">
    <molecule id="P52948-5"/>
    <property type="pathway name" value="EML4 and NUDC in mitotic spindle formation"/>
</dbReference>
<dbReference type="Reactome" id="R-HSA-9705671">
    <property type="pathway name" value="SARS-CoV-2 activates/modulates innate and adaptive immune responses"/>
</dbReference>
<dbReference type="SignaLink" id="P52948"/>
<dbReference type="SIGNOR" id="P52948"/>
<dbReference type="BioGRID-ORCS" id="4928">
    <property type="hits" value="656 hits in 1172 CRISPR screens"/>
</dbReference>
<dbReference type="CD-CODE" id="D6A53B8E">
    <property type="entry name" value="Nuclear pore complex"/>
</dbReference>
<dbReference type="CD-CODE" id="DEE660B4">
    <property type="entry name" value="Stress granule"/>
</dbReference>
<dbReference type="ChiTaRS" id="NUP98">
    <property type="organism name" value="human"/>
</dbReference>
<dbReference type="EvolutionaryTrace" id="P52948"/>
<dbReference type="GeneWiki" id="NUP98"/>
<dbReference type="GenomeRNAi" id="4928"/>
<dbReference type="Pharos" id="P52948">
    <property type="development level" value="Tbio"/>
</dbReference>
<dbReference type="PRO" id="PR:P52948"/>
<dbReference type="Proteomes" id="UP000005640">
    <property type="component" value="Chromosome 11"/>
</dbReference>
<dbReference type="RNAct" id="P52948">
    <property type="molecule type" value="protein"/>
</dbReference>
<dbReference type="Bgee" id="ENSG00000110713">
    <property type="expression patterns" value="Expressed in left testis and 199 other cell types or tissues"/>
</dbReference>
<dbReference type="ExpressionAtlas" id="P52948">
    <property type="expression patterns" value="baseline and differential"/>
</dbReference>
<dbReference type="GO" id="GO:0005829">
    <property type="term" value="C:cytosol"/>
    <property type="evidence" value="ECO:0000304"/>
    <property type="project" value="Reactome"/>
</dbReference>
<dbReference type="GO" id="GO:0016604">
    <property type="term" value="C:nuclear body"/>
    <property type="evidence" value="ECO:0000314"/>
    <property type="project" value="UniProtKB"/>
</dbReference>
<dbReference type="GO" id="GO:0005635">
    <property type="term" value="C:nuclear envelope"/>
    <property type="evidence" value="ECO:0000314"/>
    <property type="project" value="UniProtKB"/>
</dbReference>
<dbReference type="GO" id="GO:0042405">
    <property type="term" value="C:nuclear inclusion body"/>
    <property type="evidence" value="ECO:0000314"/>
    <property type="project" value="UniProtKB"/>
</dbReference>
<dbReference type="GO" id="GO:0031965">
    <property type="term" value="C:nuclear membrane"/>
    <property type="evidence" value="ECO:0000314"/>
    <property type="project" value="UniProtKB"/>
</dbReference>
<dbReference type="GO" id="GO:0034399">
    <property type="term" value="C:nuclear periphery"/>
    <property type="evidence" value="ECO:0000314"/>
    <property type="project" value="UniProtKB"/>
</dbReference>
<dbReference type="GO" id="GO:0005643">
    <property type="term" value="C:nuclear pore"/>
    <property type="evidence" value="ECO:0000314"/>
    <property type="project" value="UniProtKB"/>
</dbReference>
<dbReference type="GO" id="GO:0044614">
    <property type="term" value="C:nuclear pore cytoplasmic filaments"/>
    <property type="evidence" value="ECO:0000318"/>
    <property type="project" value="GO_Central"/>
</dbReference>
<dbReference type="GO" id="GO:0044615">
    <property type="term" value="C:nuclear pore nuclear basket"/>
    <property type="evidence" value="ECO:0000314"/>
    <property type="project" value="UniProtKB"/>
</dbReference>
<dbReference type="GO" id="GO:0031080">
    <property type="term" value="C:nuclear pore outer ring"/>
    <property type="evidence" value="ECO:0000314"/>
    <property type="project" value="UniProtKB"/>
</dbReference>
<dbReference type="GO" id="GO:0005654">
    <property type="term" value="C:nucleoplasm"/>
    <property type="evidence" value="ECO:0000314"/>
    <property type="project" value="UniProtKB"/>
</dbReference>
<dbReference type="GO" id="GO:1990904">
    <property type="term" value="C:ribonucleoprotein complex"/>
    <property type="evidence" value="ECO:0000315"/>
    <property type="project" value="UniProtKB"/>
</dbReference>
<dbReference type="GO" id="GO:0140693">
    <property type="term" value="F:molecular condensate scaffold activity"/>
    <property type="evidence" value="ECO:0000314"/>
    <property type="project" value="DisProt"/>
</dbReference>
<dbReference type="GO" id="GO:0003729">
    <property type="term" value="F:mRNA binding"/>
    <property type="evidence" value="ECO:0000315"/>
    <property type="project" value="UniProtKB"/>
</dbReference>
<dbReference type="GO" id="GO:0008139">
    <property type="term" value="F:nuclear localization sequence binding"/>
    <property type="evidence" value="ECO:0000318"/>
    <property type="project" value="GO_Central"/>
</dbReference>
<dbReference type="GO" id="GO:1990841">
    <property type="term" value="F:promoter-specific chromatin binding"/>
    <property type="evidence" value="ECO:0000315"/>
    <property type="project" value="UniProtKB"/>
</dbReference>
<dbReference type="GO" id="GO:0003723">
    <property type="term" value="F:RNA binding"/>
    <property type="evidence" value="ECO:0000318"/>
    <property type="project" value="GO_Central"/>
</dbReference>
<dbReference type="GO" id="GO:0008236">
    <property type="term" value="F:serine-type peptidase activity"/>
    <property type="evidence" value="ECO:0007669"/>
    <property type="project" value="UniProtKB-KW"/>
</dbReference>
<dbReference type="GO" id="GO:0017056">
    <property type="term" value="F:structural constituent of nuclear pore"/>
    <property type="evidence" value="ECO:0000315"/>
    <property type="project" value="UniProtKB"/>
</dbReference>
<dbReference type="GO" id="GO:0003713">
    <property type="term" value="F:transcription coactivator activity"/>
    <property type="evidence" value="ECO:0000315"/>
    <property type="project" value="UniProtKB"/>
</dbReference>
<dbReference type="GO" id="GO:0051028">
    <property type="term" value="P:mRNA transport"/>
    <property type="evidence" value="ECO:0007669"/>
    <property type="project" value="UniProtKB-KW"/>
</dbReference>
<dbReference type="GO" id="GO:0051292">
    <property type="term" value="P:nuclear pore complex assembly"/>
    <property type="evidence" value="ECO:0000315"/>
    <property type="project" value="UniProtKB"/>
</dbReference>
<dbReference type="GO" id="GO:0006999">
    <property type="term" value="P:nuclear pore organization"/>
    <property type="evidence" value="ECO:0000303"/>
    <property type="project" value="UniProtKB"/>
</dbReference>
<dbReference type="GO" id="GO:0006913">
    <property type="term" value="P:nucleocytoplasmic transport"/>
    <property type="evidence" value="ECO:0000304"/>
    <property type="project" value="UniProtKB"/>
</dbReference>
<dbReference type="GO" id="GO:0048026">
    <property type="term" value="P:positive regulation of mRNA splicing, via spliceosome"/>
    <property type="evidence" value="ECO:0000315"/>
    <property type="project" value="UniProtKB"/>
</dbReference>
<dbReference type="GO" id="GO:0000973">
    <property type="term" value="P:post-transcriptional tethering of RNA polymerase II gene DNA at nuclear periphery"/>
    <property type="evidence" value="ECO:0000318"/>
    <property type="project" value="GO_Central"/>
</dbReference>
<dbReference type="GO" id="GO:0006606">
    <property type="term" value="P:protein import into nucleus"/>
    <property type="evidence" value="ECO:0000318"/>
    <property type="project" value="GO_Central"/>
</dbReference>
<dbReference type="GO" id="GO:0006508">
    <property type="term" value="P:proteolysis"/>
    <property type="evidence" value="ECO:0007669"/>
    <property type="project" value="UniProtKB-KW"/>
</dbReference>
<dbReference type="GO" id="GO:0006405">
    <property type="term" value="P:RNA export from nucleus"/>
    <property type="evidence" value="ECO:0000318"/>
    <property type="project" value="GO_Central"/>
</dbReference>
<dbReference type="GO" id="GO:0034398">
    <property type="term" value="P:telomere tethering at nuclear periphery"/>
    <property type="evidence" value="ECO:0000318"/>
    <property type="project" value="GO_Central"/>
</dbReference>
<dbReference type="DisProt" id="DP02123"/>
<dbReference type="FunFam" id="1.10.10.2360:FF:000001">
    <property type="entry name" value="Nuclear pore complex protein Nup98-Nup96"/>
    <property type="match status" value="1"/>
</dbReference>
<dbReference type="FunFam" id="1.25.40.690:FF:000001">
    <property type="entry name" value="Nuclear pore complex protein Nup98-Nup96"/>
    <property type="match status" value="1"/>
</dbReference>
<dbReference type="FunFam" id="3.30.1610.10:FF:000001">
    <property type="entry name" value="Nuclear pore complex protein Nup98-Nup96"/>
    <property type="match status" value="1"/>
</dbReference>
<dbReference type="Gene3D" id="1.10.10.2360">
    <property type="match status" value="1"/>
</dbReference>
<dbReference type="Gene3D" id="1.25.40.690">
    <property type="match status" value="1"/>
</dbReference>
<dbReference type="Gene3D" id="3.30.1610.10">
    <property type="entry name" value="Peptidase S59, nucleoporin"/>
    <property type="match status" value="1"/>
</dbReference>
<dbReference type="InterPro" id="IPR037665">
    <property type="entry name" value="Nucleoporin_S59-like"/>
</dbReference>
<dbReference type="InterPro" id="IPR007230">
    <property type="entry name" value="Nup98_auto-Pept-S59_dom"/>
</dbReference>
<dbReference type="InterPro" id="IPR036903">
    <property type="entry name" value="Nup98_auto-Pept-S59_dom_sf"/>
</dbReference>
<dbReference type="InterPro" id="IPR021967">
    <property type="entry name" value="Nup98_C"/>
</dbReference>
<dbReference type="PANTHER" id="PTHR23198:SF6">
    <property type="entry name" value="NUCLEAR PORE COMPLEX PROTEIN NUP98-NUP96"/>
    <property type="match status" value="1"/>
</dbReference>
<dbReference type="PANTHER" id="PTHR23198">
    <property type="entry name" value="NUCLEOPORIN"/>
    <property type="match status" value="1"/>
</dbReference>
<dbReference type="Pfam" id="PF04096">
    <property type="entry name" value="Nucleoporin2"/>
    <property type="match status" value="1"/>
</dbReference>
<dbReference type="Pfam" id="PF12110">
    <property type="entry name" value="Nup96"/>
    <property type="match status" value="1"/>
</dbReference>
<dbReference type="Pfam" id="PF21240">
    <property type="entry name" value="Nup98_GLEBS"/>
    <property type="match status" value="1"/>
</dbReference>
<dbReference type="SUPFAM" id="SSF82215">
    <property type="entry name" value="C-terminal autoproteolytic domain of nucleoporin nup98"/>
    <property type="match status" value="1"/>
</dbReference>
<dbReference type="PROSITE" id="PS51434">
    <property type="entry name" value="NUP_C"/>
    <property type="match status" value="1"/>
</dbReference>
<sequence>MFNKSFGTPFGGGTGGFGTTSTFGQNTGFGTTSGGAFGTSAFGSSNNTGGLFGNSQTKPGGLFGTSSFSQPATSTSTGFGFGTSTGTANTLFGTASTGTSLFSSQNNAFAQNKPTGFGNFGTSTSSGGLFGTTNTTSNPFGSTSGSLFGPSSFTAAPTGTTIKFNPPTGTDTMVKAGVSTNISTKHQCITAMKEYESKSLEELRLEDYQANRKGPQNQVGAGTTTGLFGSSPATSSATGLFSSSTTNSGFAYGQNKTAFGTSTTGFGTNPGGLFGQQNQQTTSLFSKPFGQATTTQNTGFSFGNTSTIGQPSTNTMGLFGVTQASQPGGLFGTATNTSTGTAFGTGTGLFGQTNTGFGAVGSTLFGNNKLTTFGSSTTSAPSFGTTSGGLFGNKPTLTLGTNTNTSNFGFGTNTSGNSIFGSKPAPGTLGTGLGAGFGTALGAGQASLFGNNQPKIGGPLGTGAFGAPGFNTTTATLGFGAPQAPVALTDPNASAAQQAVLQQHINSLTYSPFGDSPLFRNPMSDPKKKEERLKPTNPAAQKALTTPTHYKLTPRPATRVRPKALQTTGTAKSHLFDGLDDDEPSLANGAFMPKKSIKKLVLKNLNNSNLFSPVNRDSENLASPSEYPENGERFSFLSKPVDENHQQDGDEDSLVSHFYTNPIAKPIPQTPESAGNKHSNSNSVDDTIVALNMRAALRNGLEGSSEETSFHDESLQDDREEIENNSYHMHPAGIILTKVGYYTIPSMDDLAKITNEKGECIVSDFTIGRKGYGSIYFEGDVNLTNLNLDDIVHIRRKEVVVYLDDNQKPPVGEGLNRKAEVTLDGVWPTDKTSRCLIKSPDRLADINYEGRLEAVSRKQGAQFKEYRPETGSWVFKVSHFSKYGLQDSDEEEEEHPSKTSTKKLKTAPLPPASQTTPLQMALNGKPAPPPQSQSPEVEQLGRVVELDSDMVDITQEPVLDTMLEESMPEDQEPVSASTHIASSLGINPHVLQIMKASLLTDEEDVDMALDQRFSRLPSKADTSQEICSPRLPISASHSSKTRSLVGGLLQSKFTSGAFLSPSVSVQECRTPRAASLMNIPSTSSWSVPPPLTSVFTMPSPAPEVPLKTVGTRRQLGLVPREKSVTYGKGKLLMDMALFMGRSFRVGWGPNWTLANSGEQLNGSHELENHQIADSMEFGFLPNPVAVKPLTESPFKVHLEKLSLRQRKPDEDMKLYQTPLELKLKHSTVHVDELCPLIVPNLGVAVIHDYADWVKEASGDLPEAQIVKHWSLTWTLCEALWGHLKELDSQLNEPREYIQILERRRAFSRWLSCTATPQIEEEVSLTQKNSPVEAVFSYLTGKRISEACSLAQQSGDHRLALLLSQFVGSQSVRELLTMQLVDWHQLQADSFIQDERLRIFALLAGKPVWQLSEKKQINVCSQLDWKRSLAIHLWYLLPPTASISRALSMYEEAFQNTSDSDRYACSPLPSYLEGSGCVIAEEQNSQTPLRDVCFHLLKLYSDRHYDLNQLLEPRSITADPLDYRLSWHLWEVLRALNYTHLSAQCEGVLQASYAGQLESEGLWEWAIFVLLHIDNSGIREKAVRELLTRHCQLLETPESWAKETFLTQKLRVPAKWIHEAKAVRAHMESDKHLEALCLFKAEHWNRCHKLIIRHLASDAIINENYDYLKGFLEDLAPPERSSLIQDWETSGLVYLDYIRVIEMLRHIQQVDCSGNDLEQLHIKVTSLCSRIEQIQCYSAKDRLAQSDMAKRVANLLRVVLSLHHPPDRTSDSTPDPQRVPLRLLAPHIGRLPMPEDYAMDELRSLTQSYLRELAVGSL</sequence>
<reference key="1">
    <citation type="journal article" date="1996" name="Nat. Genet.">
        <title>The t(7;11)(p15;p15) translocation in acute myeloid leukaemia fuses the genes for nucleoporin NUP98 and class I homeoprotein HOXA9.</title>
        <authorList>
            <person name="Borrow J."/>
            <person name="Shearman A.M."/>
            <person name="Stanton V.P."/>
            <person name="Becher R."/>
            <person name="Collins T."/>
            <person name="Williams A.J."/>
            <person name="Dube I."/>
            <person name="Katz F."/>
            <person name="Kwong Y.L."/>
            <person name="Morris C."/>
            <person name="Ohyashiki K."/>
            <person name="Toyama K."/>
            <person name="Rowley J."/>
            <person name="Housman D.E."/>
        </authorList>
    </citation>
    <scope>NUCLEOTIDE SEQUENCE [MRNA] (ISOFORM 4)</scope>
    <scope>CHROMOSOMAL TRANSLOCATION WITH HOXA9</scope>
</reference>
<reference key="2">
    <citation type="submission" date="2000-03" db="EMBL/GenBank/DDBJ databases">
        <title>Molecular analysis of the chromosomal breakpoints and identification of the repetitive sequences near the breakpoints of NUP98 in therapy-related leukemia with inv(11)(p15q22).</title>
        <authorList>
            <person name="Arai Y."/>
            <person name="Kaneko Y."/>
            <person name="Kubo T."/>
            <person name="Arai K."/>
            <person name="Hosoda F."/>
            <person name="Ohki M."/>
        </authorList>
    </citation>
    <scope>NUCLEOTIDE SEQUENCE [MRNA] (ISOFORM 3)</scope>
</reference>
<reference key="3">
    <citation type="journal article" date="1999" name="J. Cell Biol.">
        <title>A conserved biogenesis pathway for nucleoporins: proteolytic processing of a 186-kilodalton precursor generates Nup98 and the novel nucleoporin, Nup96.</title>
        <authorList>
            <person name="Fontoura B.M.A."/>
            <person name="Blobel G."/>
            <person name="Matunis M.J."/>
        </authorList>
    </citation>
    <scope>NUCLEOTIDE SEQUENCE [MRNA] (ISOFORMS 1 AND 2)</scope>
    <scope>PROTEIN SEQUENCE OF 1648-1664</scope>
    <scope>SUBCELLULAR LOCATION</scope>
    <scope>PROTEOLYTIC CLEAVAGE</scope>
    <scope>MUTAGENESIS OF 863-PHE--TYR-883</scope>
</reference>
<reference key="4">
    <citation type="submission" date="2000-02" db="EMBL/GenBank/DDBJ databases">
        <title>An alternative splice form of NUP98 encodes a 196kDa NUP196 isoform.</title>
        <authorList>
            <person name="Borrow J."/>
            <person name="Housman D.E."/>
        </authorList>
    </citation>
    <scope>NUCLEOTIDE SEQUENCE [MRNA] (ISOFORM 5)</scope>
</reference>
<reference key="5">
    <citation type="journal article" date="2006" name="Nature">
        <title>Human chromosome 11 DNA sequence and analysis including novel gene identification.</title>
        <authorList>
            <person name="Taylor T.D."/>
            <person name="Noguchi H."/>
            <person name="Totoki Y."/>
            <person name="Toyoda A."/>
            <person name="Kuroki Y."/>
            <person name="Dewar K."/>
            <person name="Lloyd C."/>
            <person name="Itoh T."/>
            <person name="Takeda T."/>
            <person name="Kim D.-W."/>
            <person name="She X."/>
            <person name="Barlow K.F."/>
            <person name="Bloom T."/>
            <person name="Bruford E."/>
            <person name="Chang J.L."/>
            <person name="Cuomo C.A."/>
            <person name="Eichler E."/>
            <person name="FitzGerald M.G."/>
            <person name="Jaffe D.B."/>
            <person name="LaButti K."/>
            <person name="Nicol R."/>
            <person name="Park H.-S."/>
            <person name="Seaman C."/>
            <person name="Sougnez C."/>
            <person name="Yang X."/>
            <person name="Zimmer A.R."/>
            <person name="Zody M.C."/>
            <person name="Birren B.W."/>
            <person name="Nusbaum C."/>
            <person name="Fujiyama A."/>
            <person name="Hattori M."/>
            <person name="Rogers J."/>
            <person name="Lander E.S."/>
            <person name="Sakaki Y."/>
        </authorList>
    </citation>
    <scope>NUCLEOTIDE SEQUENCE [LARGE SCALE GENOMIC DNA]</scope>
</reference>
<reference key="6">
    <citation type="journal article" date="2004" name="Genome Res.">
        <title>The status, quality, and expansion of the NIH full-length cDNA project: the Mammalian Gene Collection (MGC).</title>
        <authorList>
            <consortium name="The MGC Project Team"/>
        </authorList>
    </citation>
    <scope>NUCLEOTIDE SEQUENCE [LARGE SCALE MRNA] (ISOFORM 4)</scope>
    <scope>NUCLEOTIDE SEQUENCE [LARGE SCALE MRNA] OF 963-1817 (ISOFORM 6)</scope>
    <source>
        <tissue>Lung carcinoma</tissue>
    </source>
</reference>
<reference key="7">
    <citation type="submission" date="1998-12" db="EMBL/GenBank/DDBJ databases">
        <authorList>
            <person name="Xu Y.H."/>
            <person name="Guo B.C."/>
            <person name="Yu Y.L."/>
        </authorList>
    </citation>
    <scope>NUCLEOTIDE SEQUENCE [MRNA] OF 1176-1817 (ISOFORM 5)</scope>
    <source>
        <tissue>Liver</tissue>
    </source>
</reference>
<reference key="8">
    <citation type="submission" date="2003-05" db="EMBL/GenBank/DDBJ databases">
        <title>Cloning of human full-length CDSs in BD Creator(TM) system donor vector.</title>
        <authorList>
            <person name="Kalnine N."/>
            <person name="Chen X."/>
            <person name="Rolfs A."/>
            <person name="Halleck A."/>
            <person name="Hines L."/>
            <person name="Eisenstein S."/>
            <person name="Koundinya M."/>
            <person name="Raphael J."/>
            <person name="Moreira D."/>
            <person name="Kelley T."/>
            <person name="LaBaer J."/>
            <person name="Lin Y."/>
            <person name="Phelan M."/>
            <person name="Farmer A."/>
        </authorList>
    </citation>
    <scope>NUCLEOTIDE SEQUENCE [LARGE SCALE MRNA] OF 1212-1817 (ISOFORM 5)</scope>
</reference>
<reference key="9">
    <citation type="journal article" date="2007" name="BMC Genomics">
        <title>The full-ORF clone resource of the German cDNA consortium.</title>
        <authorList>
            <person name="Bechtel S."/>
            <person name="Rosenfelder H."/>
            <person name="Duda A."/>
            <person name="Schmidt C.P."/>
            <person name="Ernst U."/>
            <person name="Wellenreuther R."/>
            <person name="Mehrle A."/>
            <person name="Schuster C."/>
            <person name="Bahr A."/>
            <person name="Bloecker H."/>
            <person name="Heubner D."/>
            <person name="Hoerlein A."/>
            <person name="Michel G."/>
            <person name="Wedler H."/>
            <person name="Koehrer K."/>
            <person name="Ottenwaelder B."/>
            <person name="Poustka A."/>
            <person name="Wiemann S."/>
            <person name="Schupp I."/>
        </authorList>
    </citation>
    <scope>NUCLEOTIDE SEQUENCE [LARGE SCALE MRNA] OF 1227-1817 (ISOFORM 5)</scope>
    <source>
        <tissue>Testis</tissue>
    </source>
</reference>
<reference key="10">
    <citation type="journal article" date="1999" name="Blood">
        <title>The t(11;20)(p15;q11) chromosomal translocation associated with therapy-related myelodysplastic syndrome results in an NUP98-TOP1 fusion.</title>
        <authorList>
            <person name="Ahuja H.G."/>
            <person name="Felix C.A."/>
            <person name="Aplan P.D."/>
        </authorList>
    </citation>
    <scope>CHROMOSOMAL TRANSLOCATION WITH TOP1</scope>
</reference>
<reference key="11">
    <citation type="journal article" date="1999" name="J. Cell Biol.">
        <title>RAE1 is a shuttling mRNA export factor that binds to a GLEBS-like NUP98 motif at the nuclear pore complex through multiple domains.</title>
        <authorList>
            <person name="Pritchard C.E."/>
            <person name="Fornerod M."/>
            <person name="Kasper L.H."/>
            <person name="van Deursen J.M."/>
        </authorList>
    </citation>
    <scope>INTERACTION WITH RAE1</scope>
</reference>
<reference key="12">
    <citation type="journal article" date="2000" name="Mol. Cell">
        <title>Vesicular stomatitis virus matrix protein inhibits host cell gene expression by targeting the nucleoporin Nup98.</title>
        <authorList>
            <person name="von Kobbe C."/>
            <person name="van Deursen J.M."/>
            <person name="Rodrigues J.P."/>
            <person name="Sitterlin D."/>
            <person name="Bachi A."/>
            <person name="Wu X."/>
            <person name="Wilm M."/>
            <person name="Carmo-Fonseca M."/>
            <person name="Izaurralde E."/>
        </authorList>
    </citation>
    <scope>INTERACTION WITH VESICULAR STOMATITIS VIRUS PROTEIN M (MICROBIAL INFECTION)</scope>
    <scope>SUBCELLULAR LOCATION</scope>
    <scope>SUBCELLULAR LOCATION (MICROBIAL INFECTION)</scope>
</reference>
<reference key="13">
    <citation type="journal article" date="2001" name="Blood">
        <title>A novel gene, NSD1, is fused to NUP98 in the t(5;11)(q35;p15.5) in de novo childhood acute myeloid leukemia.</title>
        <authorList>
            <person name="Jaju R.J."/>
            <person name="Fidler C."/>
            <person name="Haas O.A."/>
            <person name="Strickson A.J."/>
            <person name="Watkins F."/>
            <person name="Clark K."/>
            <person name="Cross N.C."/>
            <person name="Cheng J.F."/>
            <person name="Aplan P.D."/>
            <person name="Kearney L."/>
            <person name="Boultwood J."/>
            <person name="Wainscoat J.S."/>
        </authorList>
    </citation>
    <scope>CHROMOSOMAL TRANSLOCATION WITH NSD1</scope>
</reference>
<reference key="14">
    <citation type="journal article" date="2001" name="J. Cell Biol.">
        <title>Novel vertebrate nucleoporins Nup133 and Nup160 play a role in mRNA export.</title>
        <authorList>
            <person name="Vasu S."/>
            <person name="Shah S."/>
            <person name="Orjalo A."/>
            <person name="Park M."/>
            <person name="Fischer W.H."/>
            <person name="Forbes D.J."/>
        </authorList>
    </citation>
    <scope>SUBUNIT</scope>
</reference>
<reference key="15">
    <citation type="journal article" date="2002" name="Blood">
        <title>NUP98 is fused to the NSD3 gene in acute myeloid leukemia associated with t(8;11)(p11.2;p15).</title>
        <authorList>
            <person name="Rosati R."/>
            <person name="La Starza R."/>
            <person name="Veronese A."/>
            <person name="Aventin A."/>
            <person name="Schwienbacher C."/>
            <person name="Vallespi T."/>
            <person name="Negrini M."/>
            <person name="Martelli M.F."/>
            <person name="Mecucci C."/>
        </authorList>
    </citation>
    <scope>CHROMOSOMAL TRANSLOCATION WITH WHSC1L1</scope>
</reference>
<reference key="16">
    <citation type="journal article" date="2002" name="J. Cell Biol.">
        <title>Tpr is localized within the nuclear basket of the pore complex and has a role in nuclear protein export.</title>
        <authorList>
            <person name="Frosst P."/>
            <person name="Guan T."/>
            <person name="Subauste C."/>
            <person name="Hahn K."/>
            <person name="Gerace L."/>
        </authorList>
    </citation>
    <scope>SUBCELLULAR LOCATION</scope>
</reference>
<reference key="17">
    <citation type="journal article" date="2003" name="Mol. Biol. Cell">
        <title>Direct interaction with nup153 mediates binding of Tpr to the periphery of the nuclear pore complex.</title>
        <authorList>
            <person name="Hase M.E."/>
            <person name="Cordes V.C."/>
        </authorList>
    </citation>
    <scope>LACK OF INTERACTION WITH TPR</scope>
    <scope>SUBCELLULAR LOCATION</scope>
</reference>
<reference key="18">
    <citation type="journal article" date="2004" name="Mol. Biol. Cell">
        <title>Nucleoporins as components of the nuclear pore complex core structure and Tpr as the architectural element of the nuclear basket.</title>
        <authorList>
            <person name="Krull S."/>
            <person name="Thyberg J."/>
            <person name="Bjorkroth B."/>
            <person name="Rackwitz H.R."/>
            <person name="Cordes V.C."/>
        </authorList>
    </citation>
    <scope>FUNCTION</scope>
    <scope>IDENTIFICATION IN THE NUCLEAR PORE COMPLEX</scope>
    <scope>SUBCELLULAR LOCATION</scope>
</reference>
<reference key="19">
    <citation type="journal article" date="2005" name="Genes Chromosomes Cancer">
        <title>Characterization of 6q abnormalities in childhood acute myeloid leukemia and identification of a novel t(6;11)(q24.1;p15.5) resulting in a NUP98-C6orf80 fusion in a case of acute megakaryoblastic leukemia.</title>
        <authorList>
            <person name="Tosi S."/>
            <person name="Ballabio E."/>
            <person name="Teigler-Schlegel A."/>
            <person name="Boultwood J."/>
            <person name="Bruch J."/>
            <person name="Harbott J."/>
        </authorList>
    </citation>
    <scope>CHROMOSOMAL TRANSLOCATION WITH NUP98</scope>
    <scope>DISEASE</scope>
</reference>
<reference key="20">
    <citation type="journal article" date="2005" name="Leuk. Res.">
        <title>t(9;11)(p22;p15) with NUP98-LEDGF fusion gene in pediatric acute myeloid leukemia.</title>
        <authorList>
            <person name="Morerio C."/>
            <person name="Acquila M."/>
            <person name="Rosanda C."/>
            <person name="Rapella A."/>
            <person name="Tassano E."/>
            <person name="Micalizzi C."/>
            <person name="Panarello C."/>
        </authorList>
    </citation>
    <scope>CHROMOSOMAL TRANSLOCATION WITH PSIP1/LEDGF</scope>
</reference>
<reference key="21">
    <citation type="journal article" date="2006" name="Cell">
        <title>Global, in vivo, and site-specific phosphorylation dynamics in signaling networks.</title>
        <authorList>
            <person name="Olsen J.V."/>
            <person name="Blagoev B."/>
            <person name="Gnad F."/>
            <person name="Macek B."/>
            <person name="Kumar C."/>
            <person name="Mortensen P."/>
            <person name="Mann M."/>
        </authorList>
    </citation>
    <scope>PHOSPHORYLATION [LARGE SCALE ANALYSIS] AT SER-608; SER-612; SER-839 AND SER-888</scope>
    <scope>IDENTIFICATION BY MASS SPECTROMETRY [LARGE SCALE ANALYSIS]</scope>
    <source>
        <tissue>Cervix carcinoma</tissue>
    </source>
</reference>
<reference key="22">
    <citation type="journal article" date="2006" name="Leukemia">
        <title>NUP98 rearrangements in hematopoietic malignancies: a study of the Groupe Francophone de Cytogenetique Hematologique.</title>
        <authorList>
            <person name="Romana S.P."/>
            <person name="Radford-Weiss I."/>
            <person name="Ben Abdelali R."/>
            <person name="Schluth C."/>
            <person name="Petit A."/>
            <person name="Dastugue N."/>
            <person name="Talmant P."/>
            <person name="Bilhou-Nabera C."/>
            <person name="Mugneret F."/>
            <person name="Lafage-Pochitaloff M."/>
            <person name="Mozziconacci M.-J."/>
            <person name="Andrieu J."/>
            <person name="Lai J.-L."/>
            <person name="Terre C."/>
            <person name="Rack K."/>
            <person name="Cornillet-Lefebvre P."/>
            <person name="Luquet I."/>
            <person name="Nadal N."/>
            <person name="Nguyen-Khac F."/>
            <person name="Perot C."/>
            <person name="Van den Akker J."/>
            <person name="Fert-Ferrer S."/>
            <person name="Cabrol C."/>
            <person name="Charrin C."/>
            <person name="Tigaud I."/>
            <person name="Poirel H."/>
            <person name="Vekemans M."/>
            <person name="Bernard O.A."/>
            <person name="Berger R."/>
        </authorList>
    </citation>
    <scope>CHROMOSOMAL TRANSLOCATION WITH LNP1</scope>
</reference>
<reference key="23">
    <citation type="journal article" date="2006" name="Nat. Biotechnol.">
        <title>A probability-based approach for high-throughput protein phosphorylation analysis and site localization.</title>
        <authorList>
            <person name="Beausoleil S.A."/>
            <person name="Villen J."/>
            <person name="Gerber S.A."/>
            <person name="Rush J."/>
            <person name="Gygi S.P."/>
        </authorList>
    </citation>
    <scope>PHOSPHORYLATION [LARGE SCALE ANALYSIS] AT SER-608; SER-612; SER-623; SER-1028 AND SER-1060</scope>
    <scope>IDENTIFICATION BY MASS SPECTROMETRY [LARGE SCALE ANALYSIS]</scope>
    <source>
        <tissue>Cervix carcinoma</tissue>
    </source>
</reference>
<reference key="24">
    <citation type="journal article" date="2007" name="Leukemia">
        <title>A novel NUP98-PHF23 fusion resulting from a cryptic translocation t(11;17)(p15;p13) in acute myeloid leukemia.</title>
        <authorList>
            <person name="Reader J.C."/>
            <person name="Meekins J.S."/>
            <person name="Gojo I."/>
            <person name="Ning Y."/>
        </authorList>
    </citation>
    <scope>CHROMOSOMAL TRANSLOCATION WITH PHF23</scope>
    <source>
        <tissue>Peripheral blood</tissue>
    </source>
</reference>
<reference key="25">
    <citation type="journal article" date="2008" name="J. Proteome Res.">
        <title>Combining protein-based IMAC, peptide-based IMAC, and MudPIT for efficient phosphoproteomic analysis.</title>
        <authorList>
            <person name="Cantin G.T."/>
            <person name="Yi W."/>
            <person name="Lu B."/>
            <person name="Park S.K."/>
            <person name="Xu T."/>
            <person name="Lee J.-D."/>
            <person name="Yates J.R. III"/>
        </authorList>
    </citation>
    <scope>PHOSPHORYLATION [LARGE SCALE ANALYSIS] AT SER-608 AND SER-612</scope>
    <scope>IDENTIFICATION BY MASS SPECTROMETRY [LARGE SCALE ANALYSIS]</scope>
    <source>
        <tissue>Cervix carcinoma</tissue>
    </source>
</reference>
<reference key="26">
    <citation type="journal article" date="2008" name="Mol. Cell">
        <title>Kinase-selective enrichment enables quantitative phosphoproteomics of the kinome across the cell cycle.</title>
        <authorList>
            <person name="Daub H."/>
            <person name="Olsen J.V."/>
            <person name="Bairlein M."/>
            <person name="Gnad F."/>
            <person name="Oppermann F.S."/>
            <person name="Korner R."/>
            <person name="Greff Z."/>
            <person name="Keri G."/>
            <person name="Stemmann O."/>
            <person name="Mann M."/>
        </authorList>
    </citation>
    <scope>PHOSPHORYLATION [LARGE SCALE ANALYSIS] AT SER-888</scope>
    <scope>IDENTIFICATION BY MASS SPECTROMETRY [LARGE SCALE ANALYSIS]</scope>
    <source>
        <tissue>Cervix carcinoma</tissue>
    </source>
</reference>
<reference key="27">
    <citation type="journal article" date="2008" name="Proc. Natl. Acad. Sci. U.S.A.">
        <title>A quantitative atlas of mitotic phosphorylation.</title>
        <authorList>
            <person name="Dephoure N."/>
            <person name="Zhou C."/>
            <person name="Villen J."/>
            <person name="Beausoleil S.A."/>
            <person name="Bakalarski C.E."/>
            <person name="Elledge S.J."/>
            <person name="Gygi S.P."/>
        </authorList>
    </citation>
    <scope>PHOSPHORYLATION [LARGE SCALE ANALYSIS] AT SER-623; SER-839; SER-888; SER-934; THR-1000; SER-1023; SER-1028; SER-1043; SER-1060 AND THR-1070</scope>
    <scope>IDENTIFICATION BY MASS SPECTROMETRY [LARGE SCALE ANALYSIS]</scope>
    <source>
        <tissue>Cervix carcinoma</tissue>
    </source>
</reference>
<reference key="28">
    <citation type="journal article" date="2008" name="Proteomics">
        <title>Large-scale phosphoproteome analysis of human liver tissue by enrichment and fractionation of phosphopeptides with strong anion exchange chromatography.</title>
        <authorList>
            <person name="Han G."/>
            <person name="Ye M."/>
            <person name="Zhou H."/>
            <person name="Jiang X."/>
            <person name="Feng S."/>
            <person name="Jiang X."/>
            <person name="Tian R."/>
            <person name="Wan D."/>
            <person name="Zou H."/>
            <person name="Gu J."/>
        </authorList>
    </citation>
    <scope>PHOSPHORYLATION [LARGE SCALE ANALYSIS] AT SER-888</scope>
    <scope>IDENTIFICATION BY MASS SPECTROMETRY [LARGE SCALE ANALYSIS]</scope>
    <source>
        <tissue>Liver</tissue>
    </source>
</reference>
<reference key="29">
    <citation type="journal article" date="2009" name="Anal. Chem.">
        <title>Lys-N and trypsin cover complementary parts of the phosphoproteome in a refined SCX-based approach.</title>
        <authorList>
            <person name="Gauci S."/>
            <person name="Helbig A.O."/>
            <person name="Slijper M."/>
            <person name="Krijgsveld J."/>
            <person name="Heck A.J."/>
            <person name="Mohammed S."/>
        </authorList>
    </citation>
    <scope>IDENTIFICATION BY MASS SPECTROMETRY [LARGE SCALE ANALYSIS]</scope>
</reference>
<reference key="30">
    <citation type="journal article" date="2009" name="Sci. Signal.">
        <title>Quantitative phosphoproteomic analysis of T cell receptor signaling reveals system-wide modulation of protein-protein interactions.</title>
        <authorList>
            <person name="Mayya V."/>
            <person name="Lundgren D.H."/>
            <person name="Hwang S.-I."/>
            <person name="Rezaul K."/>
            <person name="Wu L."/>
            <person name="Eng J.K."/>
            <person name="Rodionov V."/>
            <person name="Han D.K."/>
        </authorList>
    </citation>
    <scope>PHOSPHORYLATION [LARGE SCALE ANALYSIS] AT SER-608; SER-612; SER-618; SER-623 AND SER-625</scope>
    <scope>IDENTIFICATION BY MASS SPECTROMETRY [LARGE SCALE ANALYSIS]</scope>
    <source>
        <tissue>Leukemic T-cell</tissue>
    </source>
</reference>
<reference key="31">
    <citation type="journal article" date="2009" name="Science">
        <title>Lysine acetylation targets protein complexes and co-regulates major cellular functions.</title>
        <authorList>
            <person name="Choudhary C."/>
            <person name="Kumar C."/>
            <person name="Gnad F."/>
            <person name="Nielsen M.L."/>
            <person name="Rehman M."/>
            <person name="Walther T.C."/>
            <person name="Olsen J.V."/>
            <person name="Mann M."/>
        </authorList>
    </citation>
    <scope>ACETYLATION [LARGE SCALE ANALYSIS] AT LYS-603</scope>
    <scope>IDENTIFICATION BY MASS SPECTROMETRY [LARGE SCALE ANALYSIS]</scope>
</reference>
<reference key="32">
    <citation type="journal article" date="2010" name="EMBO J.">
        <title>Protein Tpr is required for establishing nuclear pore-associated zones of heterochromatin exclusion.</title>
        <authorList>
            <person name="Krull S."/>
            <person name="Dorries J."/>
            <person name="Boysen B."/>
            <person name="Reidenbach S."/>
            <person name="Magnius L."/>
            <person name="Norder H."/>
            <person name="Thyberg J."/>
            <person name="Cordes V.C."/>
        </authorList>
    </citation>
    <scope>SUBCELLULAR LOCATION</scope>
    <scope>PROTEOLYTIC PROCESSING</scope>
</reference>
<reference key="33">
    <citation type="journal article" date="2010" name="Sci. Signal.">
        <title>Quantitative phosphoproteomics reveals widespread full phosphorylation site occupancy during mitosis.</title>
        <authorList>
            <person name="Olsen J.V."/>
            <person name="Vermeulen M."/>
            <person name="Santamaria A."/>
            <person name="Kumar C."/>
            <person name="Miller M.L."/>
            <person name="Jensen L.J."/>
            <person name="Gnad F."/>
            <person name="Cox J."/>
            <person name="Jensen T.S."/>
            <person name="Nigg E.A."/>
            <person name="Brunak S."/>
            <person name="Mann M."/>
        </authorList>
    </citation>
    <scope>PHOSPHORYLATION [LARGE SCALE ANALYSIS] AT SER-524; SER-608; SER-612; SER-623; THR-670; SER-673; SER-681; SER-839; SER-888 AND SER-934</scope>
    <scope>IDENTIFICATION BY MASS SPECTROMETRY [LARGE SCALE ANALYSIS]</scope>
    <source>
        <tissue>Cervix carcinoma</tissue>
    </source>
</reference>
<reference key="34">
    <citation type="journal article" date="2011" name="BMC Syst. Biol.">
        <title>Initial characterization of the human central proteome.</title>
        <authorList>
            <person name="Burkard T.R."/>
            <person name="Planyavsky M."/>
            <person name="Kaupe I."/>
            <person name="Breitwieser F.P."/>
            <person name="Buerckstuemmer T."/>
            <person name="Bennett K.L."/>
            <person name="Superti-Furga G."/>
            <person name="Colinge J."/>
        </authorList>
    </citation>
    <scope>IDENTIFICATION BY MASS SPECTROMETRY [LARGE SCALE ANALYSIS]</scope>
</reference>
<reference key="35">
    <citation type="journal article" date="2011" name="Sci. Signal.">
        <title>System-wide temporal characterization of the proteome and phosphoproteome of human embryonic stem cell differentiation.</title>
        <authorList>
            <person name="Rigbolt K.T."/>
            <person name="Prokhorova T.A."/>
            <person name="Akimov V."/>
            <person name="Henningsen J."/>
            <person name="Johansen P.T."/>
            <person name="Kratchmarova I."/>
            <person name="Kassem M."/>
            <person name="Mann M."/>
            <person name="Olsen J.V."/>
            <person name="Blagoev B."/>
        </authorList>
    </citation>
    <scope>PHOSPHORYLATION [LARGE SCALE ANALYSIS] AT SER-612; SER-623; SER-683; SER-839 AND SER-888</scope>
    <scope>IDENTIFICATION BY MASS SPECTROMETRY [LARGE SCALE ANALYSIS]</scope>
</reference>
<reference key="36">
    <citation type="journal article" date="2012" name="Haematologica">
        <title>Functional analysis of the NUP98-CCDC28A fusion protein.</title>
        <authorList>
            <person name="Petit A."/>
            <person name="Ragu C."/>
            <person name="Soler G."/>
            <person name="Ottolenghi C."/>
            <person name="Schluth C."/>
            <person name="Radford-Weiss I."/>
            <person name="Schneider-Maunoury S."/>
            <person name="Callebaut I."/>
            <person name="Dastugue N."/>
            <person name="Drabkin H.A."/>
            <person name="Bernard O.A."/>
            <person name="Romana S."/>
            <person name="Penard-Lacronique V."/>
        </authorList>
    </citation>
    <scope>CHROMOSOMAL TRANSLOCATION WITH NUP98</scope>
</reference>
<reference key="37">
    <citation type="journal article" date="2013" name="J. Proteome Res.">
        <title>Toward a comprehensive characterization of a human cancer cell phosphoproteome.</title>
        <authorList>
            <person name="Zhou H."/>
            <person name="Di Palma S."/>
            <person name="Preisinger C."/>
            <person name="Peng M."/>
            <person name="Polat A.N."/>
            <person name="Heck A.J."/>
            <person name="Mohammed S."/>
        </authorList>
    </citation>
    <scope>PHOSPHORYLATION [LARGE SCALE ANALYSIS] AT SER-608; SER-612; SER-623; SER-681; SER-683; SER-839; SER-888; THR-1000; SER-1023; SER-1028; SER-1043 AND SER-1060</scope>
    <scope>IDENTIFICATION BY MASS SPECTROMETRY [LARGE SCALE ANALYSIS]</scope>
    <source>
        <tissue>Cervix carcinoma</tissue>
        <tissue>Erythroleukemia</tissue>
    </source>
</reference>
<reference key="38">
    <citation type="journal article" date="2013" name="Virology">
        <title>Nup153 and Nup98 bind the HIV-1 core and contribute to the early steps of HIV-1 replication.</title>
        <authorList>
            <person name="Di Nunzio F."/>
            <person name="Fricke T."/>
            <person name="Miccio A."/>
            <person name="Valle-Casuso J.C."/>
            <person name="Perez P."/>
            <person name="Souque P."/>
            <person name="Rizzi E."/>
            <person name="Severgnini M."/>
            <person name="Mavilio F."/>
            <person name="Charneau P."/>
            <person name="Diaz-Griffero F."/>
        </authorList>
    </citation>
    <scope>FUNCTION (MICROBIAL INFECTION)</scope>
    <scope>INTERACTION WITH HIV-1 CAPSID PROTEIN P24 AND NUCLEOCAPSID PROTEIN P7 (MICROBIAL INFECTION)</scope>
</reference>
<reference key="39">
    <citation type="journal article" date="2014" name="J. Proteomics">
        <title>An enzyme assisted RP-RPLC approach for in-depth analysis of human liver phosphoproteome.</title>
        <authorList>
            <person name="Bian Y."/>
            <person name="Song C."/>
            <person name="Cheng K."/>
            <person name="Dong M."/>
            <person name="Wang F."/>
            <person name="Huang J."/>
            <person name="Sun D."/>
            <person name="Wang L."/>
            <person name="Ye M."/>
            <person name="Zou H."/>
        </authorList>
    </citation>
    <scope>PHOSPHORYLATION [LARGE SCALE ANALYSIS] AT SER-612; SER-888 AND SER-897</scope>
    <scope>IDENTIFICATION BY MASS SPECTROMETRY [LARGE SCALE ANALYSIS]</scope>
    <source>
        <tissue>Liver</tissue>
    </source>
</reference>
<reference key="40">
    <citation type="journal article" date="2015" name="Proteomics">
        <title>N-terminome analysis of the human mitochondrial proteome.</title>
        <authorList>
            <person name="Vaca Jacome A.S."/>
            <person name="Rabilloud T."/>
            <person name="Schaeffer-Reiss C."/>
            <person name="Rompais M."/>
            <person name="Ayoub D."/>
            <person name="Lane L."/>
            <person name="Bairoch A."/>
            <person name="Van Dorsselaer A."/>
            <person name="Carapito C."/>
        </authorList>
    </citation>
    <scope>IDENTIFICATION BY MASS SPECTROMETRY [LARGE SCALE ANALYSIS]</scope>
</reference>
<reference key="41">
    <citation type="journal article" date="2017" name="Elife">
        <title>Human Nup98 regulates the localization and activity of DExH/D-box helicase DHX9.</title>
        <authorList>
            <person name="Capitanio J.S."/>
            <person name="Montpetit B."/>
            <person name="Wozniak R.W."/>
        </authorList>
    </citation>
    <scope>FUNCTION</scope>
    <scope>INTERACTION WITH DHX9</scope>
    <scope>SUBCELLULAR LOCATION</scope>
</reference>
<reference key="42">
    <citation type="journal article" date="2017" name="Nat. Struct. Mol. Biol.">
        <title>Site-specific mapping of the human SUMO proteome reveals co-modification with phosphorylation.</title>
        <authorList>
            <person name="Hendriks I.A."/>
            <person name="Lyon D."/>
            <person name="Young C."/>
            <person name="Jensen L.J."/>
            <person name="Vertegaal A.C."/>
            <person name="Nielsen M.L."/>
        </authorList>
    </citation>
    <scope>SUMOYLATION [LARGE SCALE ANALYSIS] AT LYS-563; LYS-603 AND LYS-665</scope>
    <scope>IDENTIFICATION BY MASS SPECTROMETRY [LARGE SCALE ANALYSIS]</scope>
</reference>
<reference key="43">
    <citation type="journal article" date="2018" name="PLoS Genet.">
        <title>Biallelic mutations in nucleoporin NUP88 cause lethal fetal akinesia deformation sequence.</title>
        <authorList>
            <person name="Bonnin E."/>
            <person name="Cabochette P."/>
            <person name="Filosa A."/>
            <person name="Juehlen R."/>
            <person name="Komatsuzaki S."/>
            <person name="Hezwani M."/>
            <person name="Dickmanns A."/>
            <person name="Martinelli V."/>
            <person name="Vermeersch M."/>
            <person name="Supply L."/>
            <person name="Martins N."/>
            <person name="Pirenne L."/>
            <person name="Ravenscroft G."/>
            <person name="Lombard M."/>
            <person name="Port S."/>
            <person name="Spillner C."/>
            <person name="Janssens S."/>
            <person name="Roets E."/>
            <person name="Van Dorpe J."/>
            <person name="Lammens M."/>
            <person name="Kehlenbach R.H."/>
            <person name="Ficner R."/>
            <person name="Laing N.G."/>
            <person name="Hoffmann K."/>
            <person name="Vanhollebeke B."/>
            <person name="Fahrenkrog B."/>
        </authorList>
    </citation>
    <scope>INTERACTION WITH NUP88</scope>
</reference>
<reference key="44">
    <citation type="journal article" date="2020" name="Proc. Natl. Acad. Sci. U.S.A.">
        <title>SARS-CoV-2 Orf6 hijacks Nup98 to block STAT nuclear import and antagonize interferon signaling.</title>
        <authorList>
            <person name="Miorin L."/>
            <person name="Kehrer T."/>
            <person name="Sanchez-Aparicio M.T."/>
            <person name="Zhang K."/>
            <person name="Cohen P."/>
            <person name="Patel R.S."/>
            <person name="Cupic A."/>
            <person name="Makio T."/>
            <person name="Mei M."/>
            <person name="Moreno E."/>
            <person name="Danziger O."/>
            <person name="White K.M."/>
            <person name="Rathnasinghe R."/>
            <person name="Uccellini M."/>
            <person name="Gao S."/>
            <person name="Aydillo T."/>
            <person name="Mena I."/>
            <person name="Yin X."/>
            <person name="Martin-Sancho L."/>
            <person name="Krogan N.J."/>
            <person name="Chanda S.K."/>
            <person name="Schotsaert M."/>
            <person name="Wozniak R.W."/>
            <person name="Ren Y."/>
            <person name="Rosenberg B.R."/>
            <person name="Fontoura B.M.A."/>
            <person name="Garcia-Sastre A."/>
        </authorList>
    </citation>
    <scope>INTERACTION WITH SARS-COV-2 ORF6 PROTEIN (MICROBIAL INFECTION)</scope>
    <scope>SUBCELLULAR LOCATION</scope>
</reference>
<reference key="45">
    <citation type="journal article" date="2021" name="Biochem. Biophys. Res. Commun.">
        <title>Overexpression of SARS-CoV-2 protein ORF6 dislocates RAE1 and NUP98 from the nuclear pore complex.</title>
        <authorList>
            <person name="Kato K."/>
            <person name="Ikliptikawati D.K."/>
            <person name="Kobayashi A."/>
            <person name="Kondo H."/>
            <person name="Lim K."/>
            <person name="Hazawa M."/>
            <person name="Wong R.W."/>
        </authorList>
    </citation>
    <scope>INTERACTION WITH SARS-COV-2 ORF6 PROTEIN (MICROBIAL INFECTION)</scope>
    <scope>SUBCELLULAR LOCATION</scope>
</reference>
<reference key="46">
    <citation type="journal article" date="2021" name="MBio">
        <title>SARS-CoV-2 ORF6 Disrupts Bidirectional Nucleocytoplasmic Transport through Interactions with Rae1 and Nup98.</title>
        <authorList>
            <person name="Addetia A."/>
            <person name="Lieberman N.A.P."/>
            <person name="Phung Q."/>
            <person name="Hsiang T.Y."/>
            <person name="Xie H."/>
            <person name="Roychoudhury P."/>
            <person name="Shrestha L."/>
            <person name="Loprieno M.A."/>
            <person name="Huang M.L."/>
            <person name="Gale M. Jr."/>
            <person name="Jerome K.R."/>
            <person name="Greninger A.L."/>
        </authorList>
    </citation>
    <scope>INTERACTION WITH SARS-COV-2 ORF6 PROTEIN (MICROBIAL INFECTION) AND SARS-COV ORF6 (MICROBIAL INFECTION)</scope>
</reference>
<reference key="47">
    <citation type="journal article" date="2002" name="Mol. Cell">
        <title>The three-dimensional structure of the autoproteolytic, nuclear pore-targeting domain of the human nucleoporin Nup98.</title>
        <authorList>
            <person name="Hodel A.E."/>
            <person name="Hodel M.R."/>
            <person name="Griffis E.R."/>
            <person name="Hennig K.A."/>
            <person name="Ratner G.A."/>
            <person name="Xu S."/>
            <person name="Powers M.A."/>
        </authorList>
    </citation>
    <scope>X-RAY CRYSTALLOGRAPHY (3.0 ANGSTROMS) OF 710-870 OF NUP98</scope>
    <scope>CATALYTIC ACTIVITY</scope>
    <scope>INTERACTION WITH NUP96</scope>
    <scope>SUBCELLULAR LOCATION</scope>
    <scope>AUTOPROTEOLYTIC PROCESSING</scope>
    <scope>ACTIVE SITE</scope>
    <scope>MUTAGENESIS OF LYS-808; ASN-816; HIS-879; SER-881 AND LYS-882</scope>
</reference>
<reference key="48">
    <citation type="journal article" date="2008" name="Protein Sci.">
        <title>Structural constraints on autoprocessing of the human nucleoporin Nup98.</title>
        <authorList>
            <person name="Sun Y."/>
            <person name="Guo H.C."/>
        </authorList>
    </citation>
    <scope>X-RAY CRYSTALLOGRAPHY (1.9 ANGSTROMS) OF 733-887</scope>
    <scope>CATALYTIC ACTIVITY</scope>
    <scope>SUBUNIT</scope>
    <scope>AUTOPROTEOLYTIC PROCESSING</scope>
    <scope>ACTIVE SITE</scope>
    <scope>MUTAGENESIS OF SER-881</scope>
</reference>
<reference key="49">
    <citation type="journal article" date="2010" name="Proc. Natl. Acad. Sci. U.S.A.">
        <title>Structural and functional analysis of the interaction between the nucleoporin Nup98 and the mRNA export factor Rae1.</title>
        <authorList>
            <person name="Ren Y."/>
            <person name="Seo H.S."/>
            <person name="Blobel G."/>
            <person name="Hoelz A."/>
        </authorList>
    </citation>
    <scope>X-RAY CRYSTALLOGRAPHY (1.65 ANGSTROMS) OF 158-213 IN COMPLEX WITH RAE1</scope>
    <scope>INTERACTION WITH RAE1</scope>
</reference>
<reference key="50">
    <citation type="journal article" date="1996" name="Nat. Genet.">
        <title>Fusion of the nucleoporin gene NUP98 to HOXA9 by the chromosome translocation t(7;11)(p15;p15) in human myeloid leukaemia.</title>
        <authorList>
            <person name="Nakamura T."/>
            <person name="Largaespada D.A."/>
            <person name="Lee M.P."/>
            <person name="Johnson L.A."/>
            <person name="Ohyashiki K."/>
            <person name="Toyama K."/>
            <person name="Chen S.J."/>
            <person name="Willman C.L."/>
            <person name="Chen I.M."/>
            <person name="Feinberg A.P."/>
            <person name="Jenkins N.A."/>
            <person name="Copeland N.G."/>
            <person name="Shaughnessy J.D. Jr."/>
        </authorList>
    </citation>
    <scope>DISEASE</scope>
    <scope>CHROMOSOMAL TRANSLOCATION WITH HOXA9</scope>
</reference>
<reference key="51">
    <citation type="journal article" date="1999" name="Blood">
        <title>The (4;11)(q21;p15) translocation fuses the NUP98 and RAP1GDS1 genes and is recurrent in T-cell acute lymphocytic leukemia.</title>
        <authorList>
            <person name="Hussey D.J."/>
            <person name="Nicola M."/>
            <person name="Moore S."/>
            <person name="Peters G.B."/>
            <person name="Dobrovic A."/>
        </authorList>
    </citation>
    <scope>DISEASE</scope>
    <scope>CHROMOSOMAL TRANSLOCATION WITH RAP1GDS1</scope>
</reference>
<reference key="52">
    <citation type="journal article" date="2000" name="Br. J. Haematol.">
        <title>t(4;11)(q21;p15) translocation involving NUP98 and RAP1GDS1 genes: characterization of a new subset of T acute lymphoblastic leukaemia.</title>
        <authorList>
            <person name="Mecucci C."/>
            <person name="La Starza R."/>
            <person name="Negrini M."/>
            <person name="Sabbioni S."/>
            <person name="Crescenzi B."/>
            <person name="Leoni P."/>
            <person name="Di Raimondo F."/>
            <person name="Krampera M."/>
            <person name="Cimino G."/>
            <person name="Tafuri A."/>
            <person name="Cuneo A."/>
            <person name="Vitale A."/>
            <person name="Foa R."/>
        </authorList>
    </citation>
    <scope>DISEASE</scope>
    <scope>CHROMOSOMAL TRANSLOCATION WITH RAP1GDS1</scope>
</reference>
<reference key="53">
    <citation type="journal article" date="2006" name="Genes Chromosomes Cancer">
        <title>Identification of NUP98 abnormalities in acute leukemia: JARID1A (12p13) as a new partner gene.</title>
        <authorList>
            <person name="van Zutven L.J."/>
            <person name="Onen E."/>
            <person name="Velthuizen S.C."/>
            <person name="van Drunen E."/>
            <person name="von Bergh A.R."/>
            <person name="van den Heuvel-Eibrink M.M."/>
            <person name="Veronese A."/>
            <person name="Mecucci C."/>
            <person name="Negrini M."/>
            <person name="de Greef G.E."/>
            <person name="Beverloo H.B."/>
        </authorList>
    </citation>
    <scope>DISEASE</scope>
    <scope>CHROMOSOMAL TRANSLOCATIONS WITH KDM5A AND RAP1GDS1</scope>
</reference>
<reference key="54">
    <citation type="journal article" date="2006" name="Science">
        <title>The consensus coding sequences of human breast and colorectal cancers.</title>
        <authorList>
            <person name="Sjoeblom T."/>
            <person name="Jones S."/>
            <person name="Wood L.D."/>
            <person name="Parsons D.W."/>
            <person name="Lin J."/>
            <person name="Barber T.D."/>
            <person name="Mandelker D."/>
            <person name="Leary R.J."/>
            <person name="Ptak J."/>
            <person name="Silliman N."/>
            <person name="Szabo S."/>
            <person name="Buckhaults P."/>
            <person name="Farrell C."/>
            <person name="Meeh P."/>
            <person name="Markowitz S.D."/>
            <person name="Willis J."/>
            <person name="Dawson D."/>
            <person name="Willson J.K.V."/>
            <person name="Gazdar A.F."/>
            <person name="Hartigan J."/>
            <person name="Wu L."/>
            <person name="Liu C."/>
            <person name="Parmigiani G."/>
            <person name="Park B.H."/>
            <person name="Bachman K.E."/>
            <person name="Papadopoulos N."/>
            <person name="Vogelstein B."/>
            <person name="Kinzler K.W."/>
            <person name="Velculescu V.E."/>
        </authorList>
    </citation>
    <scope>VARIANT [LARGE SCALE ANALYSIS] VAL-1669</scope>
</reference>
<reference key="55">
    <citation type="journal article" date="2013" name="Leukemia">
        <title>NUP98/JARID1A is a novel recurrent abnormality in pediatric acute megakaryoblastic leukemia with a distinct HOX gene expression pattern.</title>
        <authorList>
            <person name="de Rooij J.D."/>
            <person name="Hollink I.H."/>
            <person name="Arentsen-Peters S.T."/>
            <person name="van Galen J.F."/>
            <person name="Berna Beverloo H."/>
            <person name="Baruchel A."/>
            <person name="Trka J."/>
            <person name="Reinhardt D."/>
            <person name="Sonneveld E."/>
            <person name="Zimmermann M."/>
            <person name="Alonzo T.A."/>
            <person name="Pieters R."/>
            <person name="Meshinchi S."/>
            <person name="van den Heuvel-Eibrink M.M."/>
            <person name="Zwaan C.M."/>
        </authorList>
    </citation>
    <scope>DISEASE</scope>
    <scope>CHROMOSOMAL TRANSLOCATION WITH KDM5A</scope>
</reference>
<reference key="56">
    <citation type="journal article" date="2021" name="Nature">
        <title>Phase separation drives aberrant chromatin looping and cancer development.</title>
        <authorList>
            <person name="Ahn J.H."/>
            <person name="Davis E.S."/>
            <person name="Daugird T.A."/>
            <person name="Zhao S."/>
            <person name="Quiroga I.Y."/>
            <person name="Uryu H."/>
            <person name="Li J."/>
            <person name="Storey A.J."/>
            <person name="Tsai Y.H."/>
            <person name="Keeley D.P."/>
            <person name="Mackintosh S.G."/>
            <person name="Edmondson R.D."/>
            <person name="Byrum S.D."/>
            <person name="Cai L."/>
            <person name="Tackett A.J."/>
            <person name="Zheng D."/>
            <person name="Legant W.R."/>
            <person name="Phanstiel D.H."/>
            <person name="Wang G.G."/>
        </authorList>
    </citation>
    <scope>CHARACTERIZATION OF CHROMOSOMAL TRANSLOCATION WITH HOXA9</scope>
</reference>
<name>NUP98_HUMAN</name>
<evidence type="ECO:0000250" key="1">
    <source>
        <dbReference type="UniProtKB" id="Q6PFD9"/>
    </source>
</evidence>
<evidence type="ECO:0000255" key="2">
    <source>
        <dbReference type="PROSITE-ProRule" id="PRU00765"/>
    </source>
</evidence>
<evidence type="ECO:0000256" key="3">
    <source>
        <dbReference type="SAM" id="MobiDB-lite"/>
    </source>
</evidence>
<evidence type="ECO:0000269" key="4">
    <source>
    </source>
</evidence>
<evidence type="ECO:0000269" key="5">
    <source>
    </source>
</evidence>
<evidence type="ECO:0000269" key="6">
    <source>
    </source>
</evidence>
<evidence type="ECO:0000269" key="7">
    <source>
    </source>
</evidence>
<evidence type="ECO:0000269" key="8">
    <source>
    </source>
</evidence>
<evidence type="ECO:0000269" key="9">
    <source>
    </source>
</evidence>
<evidence type="ECO:0000269" key="10">
    <source>
    </source>
</evidence>
<evidence type="ECO:0000269" key="11">
    <source>
    </source>
</evidence>
<evidence type="ECO:0000269" key="12">
    <source>
    </source>
</evidence>
<evidence type="ECO:0000269" key="13">
    <source>
    </source>
</evidence>
<evidence type="ECO:0000269" key="14">
    <source>
    </source>
</evidence>
<evidence type="ECO:0000269" key="15">
    <source>
    </source>
</evidence>
<evidence type="ECO:0000269" key="16">
    <source>
    </source>
</evidence>
<evidence type="ECO:0000269" key="17">
    <source>
    </source>
</evidence>
<evidence type="ECO:0000269" key="18">
    <source>
    </source>
</evidence>
<evidence type="ECO:0000269" key="19">
    <source>
    </source>
</evidence>
<evidence type="ECO:0000269" key="20">
    <source>
    </source>
</evidence>
<evidence type="ECO:0000269" key="21">
    <source>
    </source>
</evidence>
<evidence type="ECO:0000269" key="22">
    <source>
    </source>
</evidence>
<evidence type="ECO:0000269" key="23">
    <source>
    </source>
</evidence>
<evidence type="ECO:0000269" key="24">
    <source>
    </source>
</evidence>
<evidence type="ECO:0000269" key="25">
    <source>
    </source>
</evidence>
<evidence type="ECO:0000269" key="26">
    <source>
    </source>
</evidence>
<evidence type="ECO:0000269" key="27">
    <source>
    </source>
</evidence>
<evidence type="ECO:0000269" key="28">
    <source>
    </source>
</evidence>
<evidence type="ECO:0000269" key="29">
    <source>
    </source>
</evidence>
<evidence type="ECO:0000303" key="30">
    <source>
    </source>
</evidence>
<evidence type="ECO:0000303" key="31">
    <source>
    </source>
</evidence>
<evidence type="ECO:0000303" key="32">
    <source>
    </source>
</evidence>
<evidence type="ECO:0000303" key="33">
    <source>
    </source>
</evidence>
<evidence type="ECO:0000303" key="34">
    <source ref="2"/>
</evidence>
<evidence type="ECO:0000303" key="35">
    <source ref="4"/>
</evidence>
<evidence type="ECO:0000303" key="36">
    <source ref="7"/>
</evidence>
<evidence type="ECO:0000303" key="37">
    <source ref="8"/>
</evidence>
<evidence type="ECO:0000305" key="38"/>
<evidence type="ECO:0000312" key="39">
    <source>
        <dbReference type="HGNC" id="HGNC:8068"/>
    </source>
</evidence>
<evidence type="ECO:0007744" key="40">
    <source>
    </source>
</evidence>
<evidence type="ECO:0007744" key="41">
    <source>
    </source>
</evidence>
<evidence type="ECO:0007744" key="42">
    <source>
    </source>
</evidence>
<evidence type="ECO:0007744" key="43">
    <source>
    </source>
</evidence>
<evidence type="ECO:0007744" key="44">
    <source>
    </source>
</evidence>
<evidence type="ECO:0007744" key="45">
    <source>
    </source>
</evidence>
<evidence type="ECO:0007744" key="46">
    <source>
    </source>
</evidence>
<evidence type="ECO:0007744" key="47">
    <source>
    </source>
</evidence>
<evidence type="ECO:0007744" key="48">
    <source>
    </source>
</evidence>
<evidence type="ECO:0007744" key="49">
    <source>
    </source>
</evidence>
<evidence type="ECO:0007744" key="50">
    <source>
    </source>
</evidence>
<evidence type="ECO:0007744" key="51">
    <source>
    </source>
</evidence>
<evidence type="ECO:0007744" key="52">
    <source>
    </source>
</evidence>
<evidence type="ECO:0007829" key="53">
    <source>
        <dbReference type="PDB" id="2Q5X"/>
    </source>
</evidence>
<evidence type="ECO:0007829" key="54">
    <source>
        <dbReference type="PDB" id="2Q5Y"/>
    </source>
</evidence>
<evidence type="ECO:0007829" key="55">
    <source>
        <dbReference type="PDB" id="3MMY"/>
    </source>
</evidence>
<evidence type="ECO:0007829" key="56">
    <source>
        <dbReference type="PDB" id="7Q64"/>
    </source>
</evidence>
<evidence type="ECO:0007829" key="57">
    <source>
        <dbReference type="PDB" id="7Q66"/>
    </source>
</evidence>
<evidence type="ECO:0007829" key="58">
    <source>
        <dbReference type="PDB" id="8CI8"/>
    </source>
</evidence>
<comment type="function">
    <text evidence="13 25">Plays a role in the nuclear pore complex (NPC) assembly and/or maintenance. NUP98 and NUP96 are involved in the bidirectional transport across the NPC (PubMed:33097660). May anchor NUP153 and TPR to the NPC. In cooperation with DHX9, plays a role in transcription and alternative splicing activation of a subset of genes (PubMed:28221134). Involved in the localization of DHX9 in discrete intranuclear foci (GLFG-body) (PubMed:28221134).</text>
</comment>
<comment type="function">
    <text evidence="21">(Microbial infection) Interacts with HIV-1 capsid protein P24 and nucleocapsid protein P7 and may thereby promote the integration of the virus in the host nucleus (in vitro) (PubMed:23523133). Binding affinity to HIV-1 CA-NC complexes bearing the capsid change Asn-74-Asp is reduced (in vitro) (PubMed:23523133).</text>
</comment>
<comment type="subunit">
    <text evidence="1 5 9 11 13 18 20 23 24">Part of the nuclear pore complex (NPC) (PubMed:15229283, PubMed:18287282). Interacts directly with NUP96 (PubMed:12191480). Part of the Nup160 subcomplex in the nuclear pore which is composed of NUP160, NUP133, NUP107 and NUP96; this complex plays a role in RNA export and in tethering NUP98 and NUP153 to the nucleus (PubMed:11684705). Interacts with RAE1 (PubMed:10209021, PubMed:20498086). Does not interact with TPR (PubMed:11684705). Interacts with NUP88 (PubMed:30543681). Interacts directly with NUP88 and NUP214, subunits of the cytoplasmic filaments of the NPC (By similarity). Interacts (via N-terminus) with DHX9 (via DRBM, OB-fold and RGG domains); this interaction occurs in a RNA-dependent manner and stimulates DHX9-mediated ATPase activity (PubMed:28221134).</text>
</comment>
<comment type="subunit">
    <text evidence="21">(Microbial infection) Interacts with HIV-1 capsid protein P24 and nucleocapsid protein P7 (in vitro); the interaction may promote the integration of the virus in the host nucleus (in vitro).</text>
</comment>
<comment type="subunit">
    <text evidence="8">(Microbial infection) Interacts with vesicular stomatitis virus protein M (PubMed:11106761).</text>
</comment>
<comment type="subunit">
    <text evidence="25 26 27">(Microbial infection) Interacts with SARS coronavirus-2/SARS-CoV-2 ORF6 protein; the interaction blocks STAT1 nuclear translocation, antagonizes interferon signaling and blocks mRNA nuclear export (ex vivo).</text>
</comment>
<comment type="subunit">
    <text evidence="28">(Microbial infection) Interacts with SARS coronavirus/SARS-CoV ORF6 protein.</text>
</comment>
<comment type="interaction">
    <interactant intactId="EBI-295727">
        <id>P52948</id>
    </interactant>
    <interactant intactId="EBI-724495">
        <id>P78406</id>
        <label>RAE1</label>
    </interactant>
    <organismsDiffer>false</organismsDiffer>
    <experiments>12</experiments>
</comment>
<comment type="interaction">
    <interactant intactId="EBI-295727">
        <id>P52948</id>
    </interactant>
    <interactant intactId="EBI-25475897">
        <id>P0DTC6</id>
        <label>6</label>
    </interactant>
    <organismsDiffer>true</organismsDiffer>
    <experiments>11</experiments>
</comment>
<comment type="interaction">
    <interactant intactId="EBI-295727">
        <id>P52948</id>
    </interactant>
    <interactant intactId="EBI-25489038">
        <id>P59634</id>
        <label>6</label>
    </interactant>
    <organismsDiffer>true</organismsDiffer>
    <experiments>6</experiments>
</comment>
<comment type="subcellular location">
    <subcellularLocation>
        <location evidence="4 8 10 11 12 13 19 23 26">Nucleus membrane</location>
        <topology>Peripheral membrane protein</topology>
        <orientation evidence="10">Nucleoplasmic side</orientation>
    </subcellularLocation>
    <subcellularLocation>
        <location evidence="10 12 13 25">Nucleus</location>
        <location evidence="10 12 13 25">Nuclear pore complex</location>
    </subcellularLocation>
    <subcellularLocation>
        <location evidence="11 23">Nucleus</location>
        <location evidence="11 23">Nucleoplasm</location>
    </subcellularLocation>
    <text evidence="8 10 12 23">Localized to the nucleoplasmic side of the nuclear pore complex (NPC), at or near the nucleoplasmic basket (PubMed:11839768). Dissociates from the dissasembled NPC structure early during prophase of mitosis (PubMed:12802065). Colocalized with NUP153 and TPR to the nuclear basket of NPC (PubMed:11839768). Colocalized with DHX9 in diffuse and discrete intranuclear foci (GLFG-body) (PubMed:11839768, PubMed:28221134).</text>
</comment>
<comment type="subcellular location">
    <subcellularLocation>
        <location evidence="8">Nucleus membrane</location>
    </subcellularLocation>
    <text evidence="8">(Microbial infection) Remains localized to the nuclear membrane after poliovirus (PV) infection.</text>
</comment>
<comment type="alternative products">
    <event type="alternative splicing"/>
    <isoform>
        <id>P52948-1</id>
        <name>1</name>
        <name>Nup98-Nup96 precursor</name>
        <sequence type="displayed"/>
    </isoform>
    <isoform>
        <id>P52948-2</id>
        <name>2</name>
        <name>Nup98-Nup96 precursor splice variant 1</name>
        <sequence type="described" ref="VSP_003619 VSP_007944"/>
    </isoform>
    <isoform>
        <id>P52948-3</id>
        <name>3</name>
        <name>Nup98-specific 1</name>
        <sequence type="described" ref="VSP_007942 VSP_007943"/>
    </isoform>
    <isoform>
        <id>P52948-4</id>
        <name>4</name>
        <sequence type="described" ref="VSP_003619 VSP_007942 VSP_007943"/>
    </isoform>
    <isoform>
        <id>P52948-5</id>
        <name>5</name>
        <name>Nup196</name>
        <name>ADIR2</name>
        <sequence type="described" ref="VSP_003619"/>
    </isoform>
    <isoform>
        <id>P52948-6</id>
        <name>6</name>
        <sequence type="described" ref="VSP_038328"/>
    </isoform>
</comment>
<comment type="domain">
    <text>Contains G-L-F-G repeats. The FG repeat domains in Nup98 have a direct role in the transport.</text>
</comment>
<comment type="PTM">
    <text evidence="4 11 18 19">Isoform 1 to isoform 4 are autoproteolytically cleaved to yield Nup98 and Nup96 or Nup98 only, respectively (PubMed:10087256, PubMed:12191480, PubMed:18287282, PubMed:20407419). Cleaved Nup98 is necessary for the targeting of Nup98 to the nuclear pore and the interaction with Nup96 (PubMed:12191480, PubMed:20407419).</text>
</comment>
<comment type="PTM">
    <text>Proteolytically degraded after poliovirus (PV) infection; degradation is partial and NCP- and TPR-binding domains withstand degradation.</text>
</comment>
<comment type="disease">
    <text evidence="17 28 29">Chromosomal aberrations involving NUP98 have been found in acute myeloid leukemia. Translocation t(7;11)(p15;p15) with HOXA9 (PubMed:8563753). The chimera includes NUP98 intrinsic disordered regions which contribute to aberrant liquid-liquid phase separation puncta of the chimera in the nucleus. This phase-separation enhances the chimera genomic targeting and induces organization of aberrant three-dimensional chromatin structures leading to tumorous transformation (PubMed:34163069). Translocation t(11;17)(p15;p13) with PHF23 (PubMed:17287853).</text>
</comment>
<comment type="disease">
    <text evidence="15">A chromosomal aberration involving NUP98 has been found in M0 type acute myeloid leukemia. Translocation t(4;11)(q23;p15) with RAP1GDS1.</text>
</comment>
<comment type="disease">
    <text evidence="6 7">A chromosomal aberration involving NUP98 has been found in T-cell acute lymphocytic leukemia. Translocation t(4;11)(q23;p15) with RAP1GDS1.</text>
</comment>
<comment type="disease">
    <text evidence="22">A chromosomal aberration involving NUP98 has been found in M5 type acute myeloid leukemia. Translocation t(11;12)(p15;p13) with KDM5A.</text>
</comment>
<comment type="disease">
    <text evidence="14">Chromosomal aberrations involving NUP98 have been found in childhood acute myeloid leukemia. Translocation t(5;11)(q35;p15.5) with NSD1. Translocation t(8;11)(p11.2;p15) with WHSC1L1.</text>
</comment>
<comment type="disease">
    <text evidence="15 22">Chromosomal aberrations involving NUP98 have been found in M7 type childhood acute myeloid leukemia. Translocation t(11;12)(p15;p13) with KDM5A.</text>
</comment>
<comment type="disease">
    <text evidence="14">A chromosomal aberration involving NUP98 is found in a form of therapy-related myelodysplastic syndrome. Translocation t(11;20)(p15;q11) with TOP1.</text>
</comment>
<comment type="disease">
    <text evidence="14">A chromosomal aberration involving NUP98 is found in a form of T-cell acute lymphoblastic leukemia (T-ALL). Translocation t(3;11)(q12.2;p15.4) with LNP1.</text>
</comment>
<comment type="disease">
    <text evidence="14">A chromosomal aberration involving NUP98 is associated with pediatric acute myeloid leukemia (AML) with intermediate characteristics between M2-M3 French-American-British (FAB) subtypes. Translocation t(9;11)(p22;p15) with PSIP1/LEDGF. The chimeric transcript is an in-frame fusion of NUP98 exon 8 to PSIP1/LEDGF exon 4.</text>
</comment>
<comment type="disease">
    <text evidence="14">A chromosomal aberration involving NUP98 has been identified in acute leukemias. Translocation t(6;11)(q24.1;p15.5) with CCDC28A. The chimeric transcript is an in-frame fusion of NUP98 exon 13 to CCDC28A exon 2. Ectopic expression of NUP98-CCDC28A in mouse promotes the proliferative capacity and self-renewal potential of hematopoietic progenitors and rapidly induced fatal myeloproliferative neoplasms and defects in the differentiation of the erythro-megakaryocytic lineage.</text>
</comment>
<comment type="similarity">
    <text evidence="38">Belongs to the nucleoporin GLFG family.</text>
</comment>
<comment type="sequence caution" evidence="38">
    <conflict type="miscellaneous discrepancy">
        <sequence resource="EMBL-CDS" id="AAD22395"/>
    </conflict>
    <text>Contaminating sequence. Sequence of unknown origin in the C-terminal part.</text>
</comment>
<comment type="sequence caution" evidence="38">
    <conflict type="miscellaneous discrepancy">
        <sequence resource="EMBL-CDS" id="AAD22396"/>
    </conflict>
    <text>Contaminating sequence. Sequence of unknown origin in the C-terminal part.</text>
</comment>
<comment type="sequence caution" evidence="38">
    <conflict type="erroneous initiation">
        <sequence resource="EMBL-CDS" id="AAF19342"/>
    </conflict>
    <text>Truncated N-terminus.</text>
</comment>
<comment type="sequence caution" evidence="38">
    <conflict type="frameshift">
        <sequence resource="EMBL-CDS" id="AAF19342"/>
    </conflict>
</comment>
<comment type="online information" name="Atlas of Genetics and Cytogenetics in Oncology and Haematology">
    <link uri="https://atlasgeneticsoncology.org/gene/98/NUP"/>
</comment>
<accession>P52948</accession>
<accession>Q8IUT2</accession>
<accession>Q8WYB0</accession>
<accession>Q96E54</accession>
<accession>Q9H3Q4</accession>
<accession>Q9NT02</accession>
<accession>Q9UF57</accession>
<accession>Q9UHX0</accession>
<accession>Q9Y6J4</accession>
<accession>Q9Y6J5</accession>
<protein>
    <recommendedName>
        <fullName evidence="38">Nuclear pore complex protein Nup98-Nup96</fullName>
        <ecNumber evidence="11 18">3.4.21.-</ecNumber>
    </recommendedName>
    <component>
        <recommendedName>
            <fullName>Nuclear pore complex protein Nup98</fullName>
        </recommendedName>
        <alternativeName>
            <fullName>98 kDa nucleoporin</fullName>
        </alternativeName>
        <alternativeName>
            <fullName>Nucleoporin Nup98</fullName>
            <shortName>Nup98</shortName>
        </alternativeName>
    </component>
    <component>
        <recommendedName>
            <fullName>Nuclear pore complex protein Nup96</fullName>
        </recommendedName>
        <alternativeName>
            <fullName>96 kDa nucleoporin</fullName>
        </alternativeName>
        <alternativeName>
            <fullName>Nucleoporin Nup96</fullName>
            <shortName>Nup96</shortName>
        </alternativeName>
    </component>
</protein>
<gene>
    <name evidence="39" type="primary">NUP98</name>
    <name type="synonym">ADAR2</name>
</gene>